<organism>
    <name type="scientific">Homo sapiens</name>
    <name type="common">Human</name>
    <dbReference type="NCBI Taxonomy" id="9606"/>
    <lineage>
        <taxon>Eukaryota</taxon>
        <taxon>Metazoa</taxon>
        <taxon>Chordata</taxon>
        <taxon>Craniata</taxon>
        <taxon>Vertebrata</taxon>
        <taxon>Euteleostomi</taxon>
        <taxon>Mammalia</taxon>
        <taxon>Eutheria</taxon>
        <taxon>Euarchontoglires</taxon>
        <taxon>Primates</taxon>
        <taxon>Haplorrhini</taxon>
        <taxon>Catarrhini</taxon>
        <taxon>Hominidae</taxon>
        <taxon>Homo</taxon>
    </lineage>
</organism>
<accession>P98164</accession>
<accession>O00711</accession>
<accession>Q16215</accession>
<keyword id="KW-0002">3D-structure</keyword>
<keyword id="KW-0106">Calcium</keyword>
<keyword id="KW-1003">Cell membrane</keyword>
<keyword id="KW-0966">Cell projection</keyword>
<keyword id="KW-0168">Coated pit</keyword>
<keyword id="KW-0209">Deafness</keyword>
<keyword id="KW-0225">Disease variant</keyword>
<keyword id="KW-1015">Disulfide bond</keyword>
<keyword id="KW-0245">EGF-like domain</keyword>
<keyword id="KW-0254">Endocytosis</keyword>
<keyword id="KW-0967">Endosome</keyword>
<keyword id="KW-0325">Glycoprotein</keyword>
<keyword id="KW-1009">Hearing</keyword>
<keyword id="KW-0472">Membrane</keyword>
<keyword id="KW-0479">Metal-binding</keyword>
<keyword id="KW-0524">Neurogenesis</keyword>
<keyword id="KW-0597">Phosphoprotein</keyword>
<keyword id="KW-1267">Proteomics identification</keyword>
<keyword id="KW-0675">Receptor</keyword>
<keyword id="KW-1185">Reference proteome</keyword>
<keyword id="KW-0677">Repeat</keyword>
<keyword id="KW-0729">SH3-binding</keyword>
<keyword id="KW-0732">Signal</keyword>
<keyword id="KW-0812">Transmembrane</keyword>
<keyword id="KW-1133">Transmembrane helix</keyword>
<keyword id="KW-0813">Transport</keyword>
<reference key="1">
    <citation type="journal article" date="1996" name="Eur. J. Biochem.">
        <title>Cloning and sequencing of human gp330, a Ca(2+)-binding receptor with potential intracellular signaling properties.</title>
        <authorList>
            <person name="Hjaelm G."/>
            <person name="Murray E."/>
            <person name="Crumley G."/>
            <person name="Harazim W."/>
            <person name="Lundgren S."/>
            <person name="Onyango I."/>
            <person name="Ek B."/>
            <person name="Larsson M."/>
            <person name="Juhlin C."/>
            <person name="Hellman P."/>
            <person name="Davis H."/>
            <person name="Aekerstroem G."/>
            <person name="Rask L."/>
            <person name="Morse B."/>
        </authorList>
    </citation>
    <scope>NUCLEOTIDE SEQUENCE [MRNA]</scope>
    <scope>VARIANT SER-83</scope>
    <source>
        <tissue>Kidney</tissue>
    </source>
</reference>
<reference key="2">
    <citation type="journal article" date="2005" name="Nature">
        <title>Generation and annotation of the DNA sequences of human chromosomes 2 and 4.</title>
        <authorList>
            <person name="Hillier L.W."/>
            <person name="Graves T.A."/>
            <person name="Fulton R.S."/>
            <person name="Fulton L.A."/>
            <person name="Pepin K.H."/>
            <person name="Minx P."/>
            <person name="Wagner-McPherson C."/>
            <person name="Layman D."/>
            <person name="Wylie K."/>
            <person name="Sekhon M."/>
            <person name="Becker M.C."/>
            <person name="Fewell G.A."/>
            <person name="Delehaunty K.D."/>
            <person name="Miner T.L."/>
            <person name="Nash W.E."/>
            <person name="Kremitzki C."/>
            <person name="Oddy L."/>
            <person name="Du H."/>
            <person name="Sun H."/>
            <person name="Bradshaw-Cordum H."/>
            <person name="Ali J."/>
            <person name="Carter J."/>
            <person name="Cordes M."/>
            <person name="Harris A."/>
            <person name="Isak A."/>
            <person name="van Brunt A."/>
            <person name="Nguyen C."/>
            <person name="Du F."/>
            <person name="Courtney L."/>
            <person name="Kalicki J."/>
            <person name="Ozersky P."/>
            <person name="Abbott S."/>
            <person name="Armstrong J."/>
            <person name="Belter E.A."/>
            <person name="Caruso L."/>
            <person name="Cedroni M."/>
            <person name="Cotton M."/>
            <person name="Davidson T."/>
            <person name="Desai A."/>
            <person name="Elliott G."/>
            <person name="Erb T."/>
            <person name="Fronick C."/>
            <person name="Gaige T."/>
            <person name="Haakenson W."/>
            <person name="Haglund K."/>
            <person name="Holmes A."/>
            <person name="Harkins R."/>
            <person name="Kim K."/>
            <person name="Kruchowski S.S."/>
            <person name="Strong C.M."/>
            <person name="Grewal N."/>
            <person name="Goyea E."/>
            <person name="Hou S."/>
            <person name="Levy A."/>
            <person name="Martinka S."/>
            <person name="Mead K."/>
            <person name="McLellan M.D."/>
            <person name="Meyer R."/>
            <person name="Randall-Maher J."/>
            <person name="Tomlinson C."/>
            <person name="Dauphin-Kohlberg S."/>
            <person name="Kozlowicz-Reilly A."/>
            <person name="Shah N."/>
            <person name="Swearengen-Shahid S."/>
            <person name="Snider J."/>
            <person name="Strong J.T."/>
            <person name="Thompson J."/>
            <person name="Yoakum M."/>
            <person name="Leonard S."/>
            <person name="Pearman C."/>
            <person name="Trani L."/>
            <person name="Radionenko M."/>
            <person name="Waligorski J.E."/>
            <person name="Wang C."/>
            <person name="Rock S.M."/>
            <person name="Tin-Wollam A.-M."/>
            <person name="Maupin R."/>
            <person name="Latreille P."/>
            <person name="Wendl M.C."/>
            <person name="Yang S.-P."/>
            <person name="Pohl C."/>
            <person name="Wallis J.W."/>
            <person name="Spieth J."/>
            <person name="Bieri T.A."/>
            <person name="Berkowicz N."/>
            <person name="Nelson J.O."/>
            <person name="Osborne J."/>
            <person name="Ding L."/>
            <person name="Meyer R."/>
            <person name="Sabo A."/>
            <person name="Shotland Y."/>
            <person name="Sinha P."/>
            <person name="Wohldmann P.E."/>
            <person name="Cook L.L."/>
            <person name="Hickenbotham M.T."/>
            <person name="Eldred J."/>
            <person name="Williams D."/>
            <person name="Jones T.A."/>
            <person name="She X."/>
            <person name="Ciccarelli F.D."/>
            <person name="Izaurralde E."/>
            <person name="Taylor J."/>
            <person name="Schmutz J."/>
            <person name="Myers R.M."/>
            <person name="Cox D.R."/>
            <person name="Huang X."/>
            <person name="McPherson J.D."/>
            <person name="Mardis E.R."/>
            <person name="Clifton S.W."/>
            <person name="Warren W.C."/>
            <person name="Chinwalla A.T."/>
            <person name="Eddy S.R."/>
            <person name="Marra M.A."/>
            <person name="Ovcharenko I."/>
            <person name="Furey T.S."/>
            <person name="Miller W."/>
            <person name="Eichler E.E."/>
            <person name="Bork P."/>
            <person name="Suyama M."/>
            <person name="Torrents D."/>
            <person name="Waterston R.H."/>
            <person name="Wilson R.K."/>
        </authorList>
    </citation>
    <scope>NUCLEOTIDE SEQUENCE [LARGE SCALE GENOMIC DNA]</scope>
</reference>
<reference key="3">
    <citation type="journal article" date="1994" name="Genomics">
        <title>Chromosomal localization of human genes for the LDL receptor family member glycoprotein 330 (LRP2) and its associated protein RAP (LRPAP1).</title>
        <authorList>
            <person name="Korenberg J.R."/>
            <person name="Argraves K.M."/>
            <person name="Chen X.N."/>
            <person name="Tran H."/>
            <person name="Strickland D.K."/>
            <person name="Argraves W.S."/>
        </authorList>
    </citation>
    <scope>NUCLEOTIDE SEQUENCE [MRNA] OF 2705-4453</scope>
    <scope>VARIANTS GLU-4094 AND LEU-4210</scope>
    <source>
        <tissue>Kidney</tissue>
    </source>
</reference>
<reference key="4">
    <citation type="journal article" date="1994" name="Exp. Cell Res.">
        <title>A protein involved in calcium sensing of the human parathyroid and placental cytotrophoblast cells belongs to the LDL-receptor protein superfamily.</title>
        <authorList>
            <person name="Lundgren S."/>
            <person name="Hjaelm G."/>
            <person name="Hellman P."/>
            <person name="Ek B."/>
            <person name="Juhlin C."/>
            <person name="Rastad J."/>
            <person name="Klareskog L."/>
            <person name="Aakerstroem G."/>
            <person name="Rask L."/>
        </authorList>
    </citation>
    <scope>NUCLEOTIDE SEQUENCE [MRNA] OF 4139-4406</scope>
</reference>
<reference key="5">
    <citation type="journal article" date="1992" name="J. Biol. Chem.">
        <title>The 39-kDa receptor-associated protein interacts with two members of the low density lipoprotein receptor family, alpha 2-macroglobulin receptor and glycoprotein 330.</title>
        <authorList>
            <person name="Kounnas M.Z."/>
            <person name="Argraves W.S."/>
            <person name="Strickland D.K."/>
        </authorList>
    </citation>
    <scope>INTERACTION WITH LRPAP1</scope>
</reference>
<reference key="6">
    <citation type="journal article" date="1995" name="J. Biol. Chem.">
        <title>Identification of glycoprotein 330 as an endocytic receptor for apolipoprotein J/clusterin.</title>
        <authorList>
            <person name="Kounnas M.Z."/>
            <person name="Loukinova E.B."/>
            <person name="Stefansson S."/>
            <person name="Harmony J.A.K."/>
            <person name="Brewer B.H."/>
            <person name="Strickland D.K."/>
            <person name="Argraves W.S."/>
        </authorList>
    </citation>
    <scope>SUBUNIT</scope>
    <scope>INTERACTION WITH CLU</scope>
</reference>
<reference key="7">
    <citation type="journal article" date="2000" name="Biochem. J.">
        <title>Cytosolic adaptor protein Dab2 is an intracellular ligand of endocytic receptor gp600/megalin.</title>
        <authorList>
            <person name="Oleinikov A.V."/>
            <person name="Zhao J."/>
            <person name="Makker S.P."/>
        </authorList>
    </citation>
    <scope>INTERACTION WITH DAB2</scope>
</reference>
<reference key="8">
    <citation type="journal article" date="2003" name="J. Cell Sci.">
        <title>Functional interaction of megalin with the megalin-binding protein (MegBP), a novel tetratrico peptide repeat-containing adaptor molecule.</title>
        <authorList>
            <person name="Petersen H.H."/>
            <person name="Hilpert J."/>
            <person name="Militz D."/>
            <person name="Zandler V."/>
            <person name="Jacobsen C."/>
            <person name="Roebroek A.J.M."/>
            <person name="Willnow T.E."/>
        </authorList>
    </citation>
    <scope>INTERACTION WITH LRP2BP</scope>
</reference>
<reference key="9">
    <citation type="journal article" date="2004" name="Am. J. Physiol.">
        <title>Megalin mediates renal uptake of heavy metal metallothionein complexes.</title>
        <authorList>
            <person name="Klassen R.B."/>
            <person name="Crenshaw K."/>
            <person name="Kozyraki R."/>
            <person name="Verroust P.J."/>
            <person name="Tio L."/>
            <person name="Atrian S."/>
            <person name="Allen P.L."/>
            <person name="Hammond T.G."/>
        </authorList>
    </citation>
    <scope>FUNCTION</scope>
</reference>
<reference key="10">
    <citation type="journal article" date="2004" name="Biochimie">
        <title>The adaptor disabled-2 binds to the third psi xNPxY sequence on the cytoplasmic tail of megalin.</title>
        <authorList>
            <person name="Gallagher H."/>
            <person name="Oleinikov A.V."/>
            <person name="Fenske C."/>
            <person name="Newman D.J."/>
        </authorList>
    </citation>
    <scope>INTERACTION WITH DAB2</scope>
</reference>
<reference key="11">
    <citation type="journal article" date="2005" name="Cell">
        <title>Role of endocytosis in cellular uptake of sex steroids.</title>
        <authorList>
            <person name="Hammes A."/>
            <person name="Andreassen T.K."/>
            <person name="Spoelgen R."/>
            <person name="Raila J."/>
            <person name="Hubner N."/>
            <person name="Schulz H."/>
            <person name="Metzger J."/>
            <person name="Schweigert F.J."/>
            <person name="Luppa P.B."/>
            <person name="Nykjaer A."/>
            <person name="Willnow T.E."/>
        </authorList>
    </citation>
    <scope>INTERACTION WITH SHBG</scope>
</reference>
<reference key="12">
    <citation type="journal article" date="2007" name="Biochem. Biophys. Res. Commun.">
        <title>Megalin-mediated endocytosis of cystatin C in proximal tubule cells.</title>
        <authorList>
            <person name="Kaseda R."/>
            <person name="Iino N."/>
            <person name="Hosojima M."/>
            <person name="Takeda T."/>
            <person name="Hosaka K."/>
            <person name="Kobayashi A."/>
            <person name="Yamamoto K."/>
            <person name="Suzuki A."/>
            <person name="Kasai A."/>
            <person name="Suzuki Y."/>
            <person name="Gejyo F."/>
            <person name="Saito A."/>
        </authorList>
    </citation>
    <scope>INTERACTION WITH CST3</scope>
</reference>
<reference key="13">
    <citation type="journal article" date="2008" name="Neurobiol. Aging">
        <title>Megalin mediates the transport of leptin across the blood-CSF barrier.</title>
        <authorList>
            <person name="Dietrich M.O."/>
            <person name="Spuch C."/>
            <person name="Antequera D."/>
            <person name="Rodal I."/>
            <person name="de Yebenes J.G."/>
            <person name="Molina J.A."/>
            <person name="Bermejo F."/>
            <person name="Carro E."/>
        </authorList>
    </citation>
    <scope>DEVELOPMENTAL STAGE</scope>
</reference>
<reference key="14">
    <citation type="journal article" date="2013" name="Am. J. Physiol.">
        <title>Renal uptake of the antiapoptotic protein survivin is mediated by megalin at the apical membrane of the proximal tubule.</title>
        <authorList>
            <person name="Jobst-Schwan T."/>
            <person name="Knaup K.X."/>
            <person name="Nielsen R."/>
            <person name="Hackenbeck T."/>
            <person name="Buettner-Herold M."/>
            <person name="Lechler P."/>
            <person name="Kroening S."/>
            <person name="Goppelt-Struebe M."/>
            <person name="Schloetzer-Schrehardt U."/>
            <person name="Fuernrohr B.G."/>
            <person name="Voll R.E."/>
            <person name="Amann K."/>
            <person name="Eckardt K.U."/>
            <person name="Christensen E.I."/>
            <person name="Wiesener M.S."/>
        </authorList>
    </citation>
    <scope>FUNCTION</scope>
    <scope>INTERACTION WITH BIRC5</scope>
    <scope>SUBCELLULAR LOCATION</scope>
</reference>
<reference key="15">
    <citation type="journal article" date="2016" name="J. Histochem. Cytochem.">
        <title>Megalin is predominantly observed in vesicular structures in first and third trimester cytotrophoblasts of the human placenta.</title>
        <authorList>
            <person name="Storm T."/>
            <person name="Christensen E.I."/>
            <person name="Christensen J.N."/>
            <person name="Kjaergaard T."/>
            <person name="Uldbjerg N."/>
            <person name="Larsen A."/>
            <person name="Honore B."/>
            <person name="Madsen M."/>
        </authorList>
    </citation>
    <scope>SUBCELLULAR LOCATION</scope>
    <scope>TISSUE SPECIFICITY</scope>
</reference>
<reference key="16">
    <citation type="journal article" date="2013" name="J. Biol. Chem.">
        <title>Gentamicin binds to the megalin receptor as a competitive inhibitor using the common ligand binding motif of complement type repeats: insight from the NMR structure of the 10th complement type repeat domain alone and in complex with gentamicin.</title>
        <authorList>
            <person name="Dagil R."/>
            <person name="O'Shea C."/>
            <person name="Nykjaer A."/>
            <person name="Bonvin A.M."/>
            <person name="Kragelund B.B."/>
        </authorList>
    </citation>
    <scope>STRUCTURE BY NMR OF 1103-1148 IN COMPLEX WITH CALCIUM</scope>
    <scope>DISULFIDE BONDS</scope>
</reference>
<reference key="17">
    <citation type="journal article" date="2006" name="Science">
        <title>The consensus coding sequences of human breast and colorectal cancers.</title>
        <authorList>
            <person name="Sjoeblom T."/>
            <person name="Jones S."/>
            <person name="Wood L.D."/>
            <person name="Parsons D.W."/>
            <person name="Lin J."/>
            <person name="Barber T.D."/>
            <person name="Mandelker D."/>
            <person name="Leary R.J."/>
            <person name="Ptak J."/>
            <person name="Silliman N."/>
            <person name="Szabo S."/>
            <person name="Buckhaults P."/>
            <person name="Farrell C."/>
            <person name="Meeh P."/>
            <person name="Markowitz S.D."/>
            <person name="Willis J."/>
            <person name="Dawson D."/>
            <person name="Willson J.K.V."/>
            <person name="Gazdar A.F."/>
            <person name="Hartigan J."/>
            <person name="Wu L."/>
            <person name="Liu C."/>
            <person name="Parmigiani G."/>
            <person name="Park B.H."/>
            <person name="Bachman K.E."/>
            <person name="Papadopoulos N."/>
            <person name="Vogelstein B."/>
            <person name="Kinzler K.W."/>
            <person name="Velculescu V.E."/>
        </authorList>
    </citation>
    <scope>VARIANT [LARGE SCALE ANALYSIS] VAL-4272</scope>
</reference>
<reference key="18">
    <citation type="journal article" date="2007" name="Nat. Genet.">
        <title>Mutations in LRP2, which encodes the multiligand receptor megalin, cause Donnai-Barrow and facio-oculo-acoustico-renal syndromes.</title>
        <authorList>
            <person name="Kantarci S."/>
            <person name="Al-Gazali L."/>
            <person name="Hill R.S."/>
            <person name="Donnai D."/>
            <person name="Black G.C.M."/>
            <person name="Bieth E."/>
            <person name="Chassaing N."/>
            <person name="Lacombe D."/>
            <person name="Devriendt K."/>
            <person name="Teebi A."/>
            <person name="Loscertales M."/>
            <person name="Robson C."/>
            <person name="Liu T."/>
            <person name="MacLaughlin D.T."/>
            <person name="Noonan K.M."/>
            <person name="Russell M.K."/>
            <person name="Walsh C.A."/>
            <person name="Donahoe P.K."/>
            <person name="Pober B.R."/>
        </authorList>
    </citation>
    <scope>VARIANT DBS HIS-2522</scope>
</reference>
<reference key="19">
    <citation type="journal article" date="2011" name="Nature">
        <title>Exome sequencing identifies frequent mutation of the SWI/SNF complex gene PBRM1 in renal carcinoma.</title>
        <authorList>
            <person name="Varela I."/>
            <person name="Tarpey P."/>
            <person name="Raine K."/>
            <person name="Huang D."/>
            <person name="Ong C.K."/>
            <person name="Stephens P."/>
            <person name="Davies H."/>
            <person name="Jones D."/>
            <person name="Lin M.L."/>
            <person name="Teague J."/>
            <person name="Bignell G."/>
            <person name="Butler A."/>
            <person name="Cho J."/>
            <person name="Dalgliesh G.L."/>
            <person name="Galappaththige D."/>
            <person name="Greenman C."/>
            <person name="Hardy C."/>
            <person name="Jia M."/>
            <person name="Latimer C."/>
            <person name="Lau K.W."/>
            <person name="Marshall J."/>
            <person name="McLaren S."/>
            <person name="Menzies A."/>
            <person name="Mudie L."/>
            <person name="Stebbings L."/>
            <person name="Largaespada D.A."/>
            <person name="Wessels L.F.A."/>
            <person name="Richard S."/>
            <person name="Kahnoski R.J."/>
            <person name="Anema J."/>
            <person name="Tuveson D.A."/>
            <person name="Perez-Mancera P.A."/>
            <person name="Mustonen V."/>
            <person name="Fischer A."/>
            <person name="Adams D.J."/>
            <person name="Rust A."/>
            <person name="Chan-On W."/>
            <person name="Subimerb C."/>
            <person name="Dykema K."/>
            <person name="Furge K."/>
            <person name="Campbell P.J."/>
            <person name="Teh B.T."/>
            <person name="Stratton M.R."/>
            <person name="Futreal P.A."/>
        </authorList>
    </citation>
    <scope>VARIANT ARG-103</scope>
</reference>
<reference key="20">
    <citation type="journal article" date="2014" name="Clin. Genet.">
        <title>Broadening the phenotype of LRP2 mutations: a new mutation in LRP2 causes a predominantly ocular phenotype suggestive of Stickler syndrome.</title>
        <authorList>
            <person name="Schrauwen I."/>
            <person name="Sommen M."/>
            <person name="Claes C."/>
            <person name="Pinner J."/>
            <person name="Flaherty M."/>
            <person name="Collins F."/>
            <person name="Van Camp G."/>
        </authorList>
    </citation>
    <scope>VARIANT GLY-3828</scope>
</reference>
<reference key="21">
    <citation type="journal article" date="2016" name="Psychiatr. Genet.">
        <title>Identification of a homozygous missense mutation in LRP2 and a hemizygous missense mutation in TSPYL2 in a family with mild intellectual disability.</title>
        <authorList>
            <person name="Vasli N."/>
            <person name="Ahmed I."/>
            <person name="Mittal K."/>
            <person name="Ohadi M."/>
            <person name="Mikhailov A."/>
            <person name="Rafiq M.A."/>
            <person name="Bhatti A."/>
            <person name="Carter M.T."/>
            <person name="Andrade D.M."/>
            <person name="Ayub M."/>
            <person name="Vincent J.B."/>
            <person name="John P."/>
        </authorList>
    </citation>
    <scope>VARIANT ASN-3779</scope>
</reference>
<sequence length="4655" mass="521958">MDRGPAAVACTLLLALVACLAPASGQECDSAHFRCGSGHCIPADWRCDGTKDCSDDADEIGCAVVTCQQGYFKCQSEGQCIPNSWVCDQDQDCDDGSDERQDCSQSTCSSHQITCSNGQCIPSEYRCDHVRDCPDGADENDCQYPTCEQLTCDNGACYNTSQKCDWKVDCRDSSDEINCTEICLHNEFSCGNGECIPRAYVCDHDNDCQDGSDEHACNYPTCGGYQFTCPSGRCIYQNWVCDGEDDCKDNGDEDGCESGPHDVHKCSPREWSCPESGRCISIYKVCDGILDCPGREDENNTSTGKYCSMTLCSALNCQYQCHETPYGGACFCPPGYIINHNDSRTCVEFDDCQIWGICDQKCESRPGRHLCHCEEGYILERGQYCKANDSFGEASIIFSNGRDLLIGDIHGRSFRILVESQNRGVAVGVAFHYHLQRVFWTDTVQNKVFSVDINGLNIQEVLNVSVETPENLAVDWVNNKIYLVETKVNRIDMVNLDGSYRVTLITENLGHPRGIAVDPTVGYLFFSDWESLSGEPKLERAFMDGSNRKDLVKTKLGWPAGVTLDMISKRVYWVDSRFDYIETVTYDGIQRKTVVHGGSLIPHPFGVSLFEGQVFFTDWTKMAVLKANKFTETNPQVYYQASLRPYGVTVYHSLRQPYATNPCKDNNGGCEQVCVLSHRTDNDGLGFRCKCTFGFQLDTDERHCIAVQNFLIFSSQVAIRGIPFTLSTQEDVMVPVSGNPSFFVGIDFDAQDSTIFFSDMSKHMIFKQKIDGTGREILAANRVENVESLAFDWISKNLYWTDSHYKSISVMRLADKTRRTVVQYLNNPRSVVVHPFAGYLFFTDWFRPAKIMRAWSDGSHLLPVINTTLGWPNGLAIDWAASRLYWVDAYFDKIEHSTFDGLDRRRLGHIEQMTHPFGLAIFGEHLFFTDWRLGAIIRVRKADGGEMTVIRSGIAYILHLKSYDVNIQTGSNACNQPTHPNGDCSHFCFPVPNFQRVCGCPYGMRLASNHLTCEGDPTNEPPTEQCGLFSFPCKNGRCVPNYYLCDGVDDCHDNSDEQLCGTLNNTCSSSAFTCGHGECIPAHWRCDKRNDCVDGSDEHNCPTHAPASCLDTQYTCDNHQCISKNWVCDTDNDCGDGSDEKNCNSTETCQPSQFNCPNHRCIDLSFVCDGDKDCVDGSDEVGCVLNCTASQFKCASGDKCIGVTNRCDGVFDCSDNSDEAGCPTRPPGMCHSDEFQCQEDGICIPNFWECDGHPDCLYGSDEHNACVPKTCPSSYFHCDNGNCIHRAWLCDRDNDCGDMSDEKDCPTQPFRCPSWQWQCLGHNICVNLSVVCDGIFDCPNGTDESPLCNGNSCSDFNGGCTHECVQEPFGAKCLCPLGFLLANDSKTCEDIDECDILGSCSQHCYNMRGSFRCSCDTGYMLESDGRTCKVTASESLLLLVASQNKIIADSVTSQVHNIYSLVENGSYIVAVDFDSISGRIFWSDATQGKTWSAFQNGTDRRVVFDSSIILTETIAIDWVGRNLYWTDYALETIEVSKIDGSHRTVLISKNLTNPRGLALDPRMNEHLLFWSDWGHHPRIERASMDGSMRTVIVQDKIFWPCGLTIDYPNRLLYFMDSYLDYMDFCDYNGHHRRQVIASDLIIRHPYALTLFEDSVYWTDRATRRVMRANKWHGGNQSVVMYNIQWPLGIVAVHPSKQPNSVNPCAFSRCSHLCLLSSQGPHFYSCVCPSGWSLSPDLLNCLRDDQPFLITVRQHIIFGISLNPEVKSNDAMVPIAGIQNGLDVEFDDAEQYIYWVENPGEIHRVKTDGTNRTVFASISMVGPSMNLALDWISRNLYSTNPRTQSIEVLTLHGDIRYRKTLIANDGTALGVGFPIGITVDPARGKLYWSDQGTDSGVPAKIASANMDGTSVKTLFTGNLEHLECVTLDIEEQKLYWAVTGRGVIERGNVDGTDRMILVHQLSHPWGIAVHDSFLYYTDEQYEVIERVDKATGANKIVLRDNVPNLRGLQVYHRRNAAESSNGCSNNMNACQQICLPVPGGLFSCACATGFKLNPDNRSCSPYNSFIVVSMLSAIRGFSLELSDHSETMVPVAGQGRNALHVDVDVSSGFIYWCDFSSSVASDNAIRRIKPDGSSLMNIVTHGIGENGVRGIAVDWVAGNLYFTNAFVSETLIEVLRINTTYRRVLLKVTVDMPRHIVVDPKNRYLFWADYGQRPKIERSFLDCTNRTVLVSEGIVTPRGLAVDRSDGYVYWVDDSLDIIARIRINGENSEVIRYGSRYPTPYGITVFENSIIWVDRNLKKIFQASKEPENTEPPTVIRDNINWLRDVTIFDKQVQPRSPAEVNNNPCLENNGGCSHLCFALPGLHTPKCDCAFGTLQSDGKNCAISTENFLIFALSNSLRSLHLDPENHSPPFQTINVERTVMSLDYDSVSDRIYFTQNLASGVGQISYATLSSGIHTPTVIASGIGTADGIAFDWITRRIYYSDYLNQMINSMAEDGSNRTVIARVPKPRAIVLDPCQGYLYWADWDTHAKIERATLGGNFRVPIVNSSLVMPSGLTLDYEEDLLYWVDASLQRIERSTLTGVDREVIVNAAVHAFGLTLYGQYIYWTDLYTQRIYRANKYDGSGQIAMTTNLLSQPRGINTVVKNQKQQCNNPCEQFNGGCSHICAPGPNGAECQCPHEGNWYLANNRKHCIVDNGERCGASSFTCSNGRCISEEWKCDNDNDCGDGSDEMESVCALHTCSPTAFTCANGRCVQYSYRCDYYNDCGDGSDEAGCLFRDCNATTEFMCNNRRCIPREFICNGVDNCHDNNTSDEKNCPDRTCQSGYTKCHNSNICIPRVYLCDGDNDCGDNSDENPTYCTTHTCSSSEFQCASGRCIPQHWYCDQETDCFDASDEPASCGHSERTCLADEFKCDGGRCIPSEWICDGDNDCGDMSDEDKRHQCQNQNCSDSEFLCVNDRPPDRRCIPQSWVCDGDVDCTDGYDENQNCTRRTCSENEFTCGYGLCIPKIFRCDRHNDCGDYSDERGCLYQTCQQNQFTCQNGRCISKTFVCDEDNDCGDGSDELMHLCHTPEPTCPPHEFKCDNGRCIEMMKLCNHLDDCLDNSDEKGCGINECHDPSISGCDHNCTDTLTSFYCSCRPGYKLMSDKRTCVDIDECTEMPFVCSQKCENVIGSYICKCAPGYLREPDGKTCRQNSNIEPYLIFSNRYYLRNLTIDGYFYSLILEGLDNVVALDFDRVEKRLYWIDTQRQVIERMFLNKTNKETIINHRLPAAESLAVDWVSRKLYWLDARLDGLFVSDLNGGHRRMLAQHCVDANNTFCFDNPRGLALHPQYGYLYWADWGHRAYIGRVGMDGTNKSVIISTKLEWPNGITIDYTNDLLYWADAHLGYIEYSDLEGHHRHTVYDGALPHPFAITIFEDTIYWTDWNTRTVEKGNKYDGSNRQTLVNTTHRPFDIHVYHPYRQPIVSNPCGTNNGGCSHLCLIKPGGKGFTCECPDDFRTLQLSGSTYCMPMCSSTQFLCANNEKCIPIWWKCDGQKDCSDGSDELALCPQRFCRLGQFQCSDGNCTSPQTLCNAHQNCPDGSDEDRLLCENHHCDSNEWQCANKRCIPESWQCDTFNDCEDNSDEDSSHCASRTCRPGQFRCANGRCIPQAWKCDVDNDCGDHSDEPIEECMSSAHLCDNFTEFSCKTNYRCIPKWAVCNGVDDCRDNSDEQGCEERTCHPVGDFRCKNHHCIPLRWQCDGQNDCGDNSDEENCAPRECTESEFRCVNQQCIPSRWICDHYNDCGDNSDERDCEMRTCHPEYFQCTSGHCVHSELKCDGSADCLDASDEADCPTRFPDGAYCQATMFECKNHVCIPPYWKCDGDDDCGDGSDEELHLCLDVPCNSPNRFRCDNNRCIYSHEVCNGVDDCGDGTDETEEHCRKPTPKPCTEYEYKCGNGHCIPHDNVCDDADDCGDWSDELGCNKGKERTCAENICEQNCTQLNEGGFICSCTAGFETNVFDRTSCLDINECEQFGTCPQHCRNTKGSYECVCADGFTSMSDRPGKRCAAEGSSPLLLLPDNVRIRKYNLSSERFSEYLQDEEYIQAVDYDWDPKDIGLSVVYYTVRGEGSRFGAIKRAYIPNFESGRNNLVQEVDLKLKYVMQPDGIAVDWVGRHIYWSDVKNKRIEVAKLDGRYRKWLISTDLDQPAAIAVNPKLGLMFWTDWGKEPKIESAWMNGEDRNILVFEDLGWPTGLSIDYLNNDRIYWSDFKEDVIETIKYDGTDRRVIAKEAMNPYSLDIFEDQLYWISKEKGEVWKQNKFGQGKKEKTLVVNPWLTQVRIFHQLRYNKSVPNLCKQICSHLCLLRPGGYSCACPQGSSFIEGSTTECDAAIELPINLPPPCRCMHGGNCYFDETDLPKCKCPSGYTGKYCEMAFSKGISPGTTAVAVLLTILLIVVIGALAIAGFFHYRRTGSLLPALPKLPSLSSLVKPSENGNGVTFRSGADLNMDIGVSGFGPETAIDRSMAMSEDFVMEMGKQPIIFENPMYSARDSAVKVVQPIQVTVSENVDNKNYGSPINPSEIVPETNPTSPAADGTQVTKWNLFKRKSKQTTNFENPIYAQMENEQKESVAATPPPSPSLPAKPKPPSRRDPTPTYSATEDTFKDTANLVKEDSEV</sequence>
<comment type="function">
    <text evidence="1 2 3 12 21">Multiligand endocytic receptor (By similarity). Acts together with CUBN to mediate endocytosis of high-density lipoproteins (By similarity). Mediates receptor-mediated uptake of polybasic drugs such as aprotinin, aminoglycosides and polymyxin B (By similarity). In the kidney, mediates the tubular uptake and clearance of leptin (By similarity). Also mediates transport of leptin across the blood-brain barrier through endocytosis at the choroid plexus epithelium (By similarity). Endocytosis of leptin in neuronal cells is required for hypothalamic leptin signaling and leptin-mediated regulation of feeding and body weight (By similarity). Mediates endocytosis and subsequent lysosomal degradation of CST3 in kidney proximal tubule cells (By similarity). Mediates renal uptake of 25-hydroxyvitamin D3 in complex with the vitamin D3 transporter GC/DBP (By similarity). Mediates renal uptake of metallothionein-bound heavy metals (PubMed:15126248). Together with CUBN, mediates renal reabsorption of myoglobin (By similarity). Mediates renal uptake and subsequent lysosomal degradation of APOM (By similarity). Plays a role in kidney selenium homeostasis by mediating renal endocytosis of selenoprotein SEPP1 (By similarity). Mediates renal uptake of the antiapoptotic protein BIRC5/survivin which may be important for functional integrity of the kidney (PubMed:23825075). Mediates renal uptake of matrix metalloproteinase MMP2 in complex with metalloproteinase inhibitor TIMP1 (By similarity). Mediates endocytosis of Sonic hedgehog protein N-product (ShhN), the active product of SHH (By similarity). Also mediates ShhN transcytosis (By similarity). In the embryonic neuroepithelium, mediates endocytic uptake and degradation of BMP4, is required for correct SHH localization in the ventral neural tube and plays a role in patterning of the ventral telencephalon (By similarity). Required at the onset of neurulation to sequester SHH on the apical surface of neuroepithelial cells of the rostral diencephalon ventral midline and to control PTCH1-dependent uptake and intracellular trafficking of SHH (By similarity). During neurulation, required in neuroepithelial cells for uptake of folate bound to the folate receptor FOLR1 which is necessary for neural tube closure (By similarity). In the adult brain, negatively regulates BMP signaling in the subependymal zone which enables neurogenesis to proceed (By similarity). In astrocytes, mediates endocytosis of ALB which is required for the synthesis of the neurotrophic factor oleic acid (By similarity). Involved in neurite branching (By similarity). During optic nerve development, required for SHH-mediated migration and proliferation of oligodendrocyte precursor cells (By similarity). Mediates endocytic uptake and clearance of SHH in the retinal margin which protects retinal progenitor cells from mitogenic stimuli and keeps them quiescent (By similarity). Plays a role in reproductive organ development by mediating uptake in reproductive tissues of androgen and estrogen bound to the sex hormone binding protein SHBG (By similarity). Mediates endocytosis of angiotensin-2 (By similarity). Also mediates endocytosis of angiotensis 1-7 (By similarity). Binds to the complex composed of beta-amyloid protein 40 and CLU/APOJ and mediates its endocytosis and lysosomal degradation (By similarity). Required for embryonic heart development (By similarity). Required for normal hearing, possibly through interaction with estrogen in the inner ear (By similarity).</text>
</comment>
<comment type="subunit">
    <text evidence="1 2 3 9 10 11 13 14 17 21 25">Binds plasminogen, extracellular matrix components, plasminogen activator-plasminogen activator inhibitor type I complex, apolipoprotein E-enriched beta-VLDL, lipoprotein lipase, lactoferrin, CLU/clusterin and calcium (PubMed:7768901). Forms a multimeric complex together with LRPAP1 (PubMed:1400426). Interacts (via PxLPxI/L motif) with ANKRA2 (via ankyrin repeats) (By similarity). Interacts with LRP2BP (PubMed:12508107). Interacts (via NPXY motif) with DAB2; the interaction is not affected by tyrosine phosphorylation of the NPXY motif (PubMed:10769163, PubMed:15134832). Interacts with MB (By similarity). Interacts with BMP4 (By similarity). Interacts with the Sonic hedgehog protein N-product which is the active product of SHH (By similarity). Interacts with CST3 in a calcium-dependent manner (PubMed:17462596). Interacts with the vitamin-D binding protein GC/DBP (By similarity). Interacts with sex hormone-binding protein SHBG (PubMed:16143106). Interacts with angiotensin-2 (By similarity). Also interacts with angiotensin 1-7 (By similarity). Interacts with APOM (By similarity). Interacts with selenoprotein SEPP1 (By similarity). Interacts with LEP (By similarity). Interacts with ALB (By similarity). Interacts with the antiapoptotic protein BIRC5/survivin (PubMed:23825075). Interacts with matrix metalloproteinase MMP2 in complex with metalloproteinase inhibitor TIMP1 (By similarity). In neurons, forms a trimeric complex with APP and APPB1/FE65 (By similarity). Interacts with LDLRAP1/ARH; mediates trafficking of LRP2 to the endocytic recycling compartment (By similarity). Does not interact with beta-amyloid protein 40 alone but interacts with the complex composed of beta-amyloid protein 40 and CLU/APOJ (By similarity). Interacts with MDK (By similarity).</text>
</comment>
<comment type="interaction">
    <interactant intactId="EBI-947916">
        <id>P98164</id>
    </interactant>
    <interactant intactId="EBI-740128">
        <id>Q9H4K1</id>
        <label>RIBC2</label>
    </interactant>
    <organismsDiffer>false</organismsDiffer>
    <experiments>2</experiments>
</comment>
<comment type="subcellular location">
    <subcellularLocation>
        <location evidence="21 24">Apical cell membrane</location>
        <topology evidence="4">Single-pass type I membrane protein</topology>
    </subcellularLocation>
    <subcellularLocation>
        <location evidence="3">Endosome lumen</location>
    </subcellularLocation>
    <subcellularLocation>
        <location evidence="1">Membrane</location>
        <location evidence="1">Coated pit</location>
    </subcellularLocation>
    <subcellularLocation>
        <location evidence="1">Cell projection</location>
        <location evidence="1">Dendrite</location>
    </subcellularLocation>
    <subcellularLocation>
        <location evidence="1">Cell projection</location>
        <location evidence="1">Axon</location>
    </subcellularLocation>
    <text evidence="3">Localizes to brush border membranes in the kidney. In the endolymphatic sac of the inner ear, located in the lumen of endosomes as a soluble form.</text>
</comment>
<comment type="tissue specificity">
    <text evidence="24">Expressed in first and third trimester cytotrophoblasts in the placenta (at protein level) (PubMed:27798286). Absorptive epithelia, including renal proximal tubules.</text>
</comment>
<comment type="developmental stage">
    <text evidence="16">Expression in the choroid plexus of the brain is markedly reduced in aging subjects when compared with younger adults.</text>
</comment>
<comment type="domain">
    <text evidence="3">Two overlapping PxLPxI/L motifs mediate interaction with ankyrin repeats of ANKRA2.</text>
</comment>
<comment type="domain">
    <text evidence="3">The cytoplasmic domain is required for sorting to the apical cell membrane.</text>
</comment>
<comment type="PTM">
    <text evidence="3">A fraction undergoes proteolytic cleavage of the extracellular domain at the cell membrane to generate a cytoplasmic tail fragment. This is internalized into the early endosome from where it trafficks in an LDLRAP1/ARH-dependent manner to the endocytic recycling compartment (ERC). In the ERC, it is further cleaved by gamma-secretase to release a fragment which translocates to the nucleus and mediates transcriptional repression.</text>
</comment>
<comment type="PTM">
    <text evidence="1">N-glycosylation is required for ligand binding.</text>
</comment>
<comment type="disease" evidence="18">
    <disease id="DI-01501">
        <name>Donnai-Barrow syndrome</name>
        <acronym>DBS</acronym>
        <description>An autosomal recessive syndrome characterized by complete or partial agenesis of the corpus callosum, congenital diaphragmatic hernia, facial dysmorphology, ocular anomalies, sensorineural hearing loss, developmental delay, and proteinuria. There is variability in the expression of some features, such as diaphragmatic hernia, corpus callosum anomalies and proteinuria.</description>
        <dbReference type="MIM" id="222448"/>
    </disease>
    <text>The disease is caused by variants affecting the gene represented in this entry.</text>
</comment>
<comment type="similarity">
    <text evidence="28">Belongs to the LDLR family.</text>
</comment>
<proteinExistence type="evidence at protein level"/>
<evidence type="ECO:0000250" key="1">
    <source>
        <dbReference type="UniProtKB" id="A2ARV4"/>
    </source>
</evidence>
<evidence type="ECO:0000250" key="2">
    <source>
        <dbReference type="UniProtKB" id="C0HL13"/>
    </source>
</evidence>
<evidence type="ECO:0000250" key="3">
    <source>
        <dbReference type="UniProtKB" id="P98158"/>
    </source>
</evidence>
<evidence type="ECO:0000255" key="4"/>
<evidence type="ECO:0000255" key="5">
    <source>
        <dbReference type="PROSITE-ProRule" id="PRU00076"/>
    </source>
</evidence>
<evidence type="ECO:0000255" key="6">
    <source>
        <dbReference type="PROSITE-ProRule" id="PRU00124"/>
    </source>
</evidence>
<evidence type="ECO:0000255" key="7">
    <source>
        <dbReference type="PROSITE-ProRule" id="PRU00461"/>
    </source>
</evidence>
<evidence type="ECO:0000256" key="8">
    <source>
        <dbReference type="SAM" id="MobiDB-lite"/>
    </source>
</evidence>
<evidence type="ECO:0000269" key="9">
    <source>
    </source>
</evidence>
<evidence type="ECO:0000269" key="10">
    <source>
    </source>
</evidence>
<evidence type="ECO:0000269" key="11">
    <source>
    </source>
</evidence>
<evidence type="ECO:0000269" key="12">
    <source>
    </source>
</evidence>
<evidence type="ECO:0000269" key="13">
    <source>
    </source>
</evidence>
<evidence type="ECO:0000269" key="14">
    <source>
    </source>
</evidence>
<evidence type="ECO:0000269" key="15">
    <source>
    </source>
</evidence>
<evidence type="ECO:0000269" key="16">
    <source>
    </source>
</evidence>
<evidence type="ECO:0000269" key="17">
    <source>
    </source>
</evidence>
<evidence type="ECO:0000269" key="18">
    <source>
    </source>
</evidence>
<evidence type="ECO:0000269" key="19">
    <source>
    </source>
</evidence>
<evidence type="ECO:0000269" key="20">
    <source>
    </source>
</evidence>
<evidence type="ECO:0000269" key="21">
    <source>
    </source>
</evidence>
<evidence type="ECO:0000269" key="22">
    <source>
    </source>
</evidence>
<evidence type="ECO:0000269" key="23">
    <source>
    </source>
</evidence>
<evidence type="ECO:0000269" key="24">
    <source>
    </source>
</evidence>
<evidence type="ECO:0000269" key="25">
    <source>
    </source>
</evidence>
<evidence type="ECO:0000269" key="26">
    <source>
    </source>
</evidence>
<evidence type="ECO:0000269" key="27">
    <source>
    </source>
</evidence>
<evidence type="ECO:0000305" key="28"/>
<evidence type="ECO:0000312" key="29">
    <source>
        <dbReference type="HGNC" id="HGNC:6694"/>
    </source>
</evidence>
<evidence type="ECO:0007744" key="30">
    <source>
        <dbReference type="PDB" id="2M0P"/>
    </source>
</evidence>
<evidence type="ECO:0007829" key="31">
    <source>
        <dbReference type="PDB" id="2M0P"/>
    </source>
</evidence>
<gene>
    <name evidence="29" type="primary">LRP2</name>
</gene>
<name>LRP2_HUMAN</name>
<dbReference type="EMBL" id="U33837">
    <property type="protein sequence ID" value="AAB41649.1"/>
    <property type="molecule type" value="mRNA"/>
</dbReference>
<dbReference type="EMBL" id="AC007556">
    <property type="status" value="NOT_ANNOTATED_CDS"/>
    <property type="molecule type" value="Genomic_DNA"/>
</dbReference>
<dbReference type="EMBL" id="AC008178">
    <property type="status" value="NOT_ANNOTATED_CDS"/>
    <property type="molecule type" value="Genomic_DNA"/>
</dbReference>
<dbReference type="EMBL" id="U04441">
    <property type="protein sequence ID" value="AAB02882.1"/>
    <property type="molecule type" value="mRNA"/>
</dbReference>
<dbReference type="EMBL" id="S73145">
    <property type="protein sequence ID" value="AAB30825.1"/>
    <property type="molecule type" value="mRNA"/>
</dbReference>
<dbReference type="CCDS" id="CCDS2232.1"/>
<dbReference type="PIR" id="I38467">
    <property type="entry name" value="I38467"/>
</dbReference>
<dbReference type="PIR" id="I53413">
    <property type="entry name" value="I53413"/>
</dbReference>
<dbReference type="RefSeq" id="NP_004516.2">
    <property type="nucleotide sequence ID" value="NM_004525.3"/>
</dbReference>
<dbReference type="PDB" id="2M0P">
    <property type="method" value="NMR"/>
    <property type="chains" value="A=1103-1148"/>
</dbReference>
<dbReference type="PDBsum" id="2M0P"/>
<dbReference type="SMR" id="P98164"/>
<dbReference type="BioGRID" id="110216">
    <property type="interactions" value="141"/>
</dbReference>
<dbReference type="FunCoup" id="P98164">
    <property type="interactions" value="1001"/>
</dbReference>
<dbReference type="IntAct" id="P98164">
    <property type="interactions" value="79"/>
</dbReference>
<dbReference type="MINT" id="P98164"/>
<dbReference type="STRING" id="9606.ENSP00000496870"/>
<dbReference type="DrugBank" id="DB00115">
    <property type="generic name" value="Cyanocobalamin"/>
</dbReference>
<dbReference type="DrugBank" id="DB16662">
    <property type="generic name" value="Efanesoctocog alfa"/>
</dbReference>
<dbReference type="DrugBank" id="DB00798">
    <property type="generic name" value="Gentamicin"/>
</dbReference>
<dbReference type="DrugBank" id="DB00030">
    <property type="generic name" value="Insulin human"/>
</dbReference>
<dbReference type="DrugBank" id="DB00013">
    <property type="generic name" value="Urokinase"/>
</dbReference>
<dbReference type="TCDB" id="9.B.87.1.14">
    <property type="family name" value="the selenoprotein p receptor (selp-receptor) family"/>
</dbReference>
<dbReference type="GlyConnect" id="1467">
    <property type="glycosylation" value="7 N-Linked glycans (3 sites)"/>
</dbReference>
<dbReference type="GlyCosmos" id="P98164">
    <property type="glycosylation" value="66 sites, 12 glycans"/>
</dbReference>
<dbReference type="GlyGen" id="P98164">
    <property type="glycosylation" value="69 sites, 183 N-linked glycans (19 sites), 6 O-linked glycans (28 sites)"/>
</dbReference>
<dbReference type="iPTMnet" id="P98164"/>
<dbReference type="PhosphoSitePlus" id="P98164"/>
<dbReference type="SwissPalm" id="P98164"/>
<dbReference type="BioMuta" id="LRP2"/>
<dbReference type="DMDM" id="160332309"/>
<dbReference type="jPOST" id="P98164"/>
<dbReference type="MassIVE" id="P98164"/>
<dbReference type="PaxDb" id="9606-ENSP00000263816"/>
<dbReference type="PeptideAtlas" id="P98164"/>
<dbReference type="ProteomicsDB" id="57800"/>
<dbReference type="Pumba" id="P98164"/>
<dbReference type="Antibodypedia" id="962">
    <property type="antibodies" value="358 antibodies from 35 providers"/>
</dbReference>
<dbReference type="DNASU" id="4036"/>
<dbReference type="Ensembl" id="ENST00000649046.1">
    <property type="protein sequence ID" value="ENSP00000496870.1"/>
    <property type="gene ID" value="ENSG00000081479.15"/>
</dbReference>
<dbReference type="GeneID" id="4036"/>
<dbReference type="KEGG" id="hsa:4036"/>
<dbReference type="MANE-Select" id="ENST00000649046.1">
    <property type="protein sequence ID" value="ENSP00000496870.1"/>
    <property type="RefSeq nucleotide sequence ID" value="NM_004525.3"/>
    <property type="RefSeq protein sequence ID" value="NP_004516.2"/>
</dbReference>
<dbReference type="UCSC" id="uc002ues.4">
    <property type="organism name" value="human"/>
</dbReference>
<dbReference type="AGR" id="HGNC:6694"/>
<dbReference type="CTD" id="4036"/>
<dbReference type="DisGeNET" id="4036"/>
<dbReference type="GeneCards" id="LRP2"/>
<dbReference type="GeneReviews" id="LRP2"/>
<dbReference type="HGNC" id="HGNC:6694">
    <property type="gene designation" value="LRP2"/>
</dbReference>
<dbReference type="HPA" id="ENSG00000081479">
    <property type="expression patterns" value="Tissue enhanced (kidney, parathyroid gland, retina)"/>
</dbReference>
<dbReference type="MalaCards" id="LRP2"/>
<dbReference type="MIM" id="222448">
    <property type="type" value="phenotype"/>
</dbReference>
<dbReference type="MIM" id="600073">
    <property type="type" value="gene"/>
</dbReference>
<dbReference type="neXtProt" id="NX_P98164"/>
<dbReference type="OpenTargets" id="ENSG00000081479"/>
<dbReference type="Orphanet" id="2143">
    <property type="disease" value="Donnai-Barrow syndrome"/>
</dbReference>
<dbReference type="PharmGKB" id="PA30452"/>
<dbReference type="VEuPathDB" id="HostDB:ENSG00000081479"/>
<dbReference type="eggNOG" id="KOG1215">
    <property type="taxonomic scope" value="Eukaryota"/>
</dbReference>
<dbReference type="GeneTree" id="ENSGT00940000157232"/>
<dbReference type="HOGENOM" id="CLU_000085_1_1_1"/>
<dbReference type="InParanoid" id="P98164"/>
<dbReference type="OrthoDB" id="21182at2759"/>
<dbReference type="PAN-GO" id="P98164">
    <property type="GO annotations" value="5 GO annotations based on evolutionary models"/>
</dbReference>
<dbReference type="PhylomeDB" id="P98164"/>
<dbReference type="TreeFam" id="TF315253"/>
<dbReference type="PathwayCommons" id="P98164"/>
<dbReference type="Reactome" id="R-HSA-196791">
    <property type="pathway name" value="Vitamin D (calciferol) metabolism"/>
</dbReference>
<dbReference type="Reactome" id="R-HSA-8856825">
    <property type="pathway name" value="Cargo recognition for clathrin-mediated endocytosis"/>
</dbReference>
<dbReference type="Reactome" id="R-HSA-8856828">
    <property type="pathway name" value="Clathrin-mediated endocytosis"/>
</dbReference>
<dbReference type="Reactome" id="R-HSA-975634">
    <property type="pathway name" value="Retinoid metabolism and transport"/>
</dbReference>
<dbReference type="Reactome" id="R-HSA-9758890">
    <property type="pathway name" value="Transport of RCbl within the body"/>
</dbReference>
<dbReference type="SignaLink" id="P98164"/>
<dbReference type="SIGNOR" id="P98164"/>
<dbReference type="BioGRID-ORCS" id="4036">
    <property type="hits" value="7 hits in 1149 CRISPR screens"/>
</dbReference>
<dbReference type="ChiTaRS" id="LRP2">
    <property type="organism name" value="human"/>
</dbReference>
<dbReference type="EvolutionaryTrace" id="P98164"/>
<dbReference type="GeneWiki" id="LRP2"/>
<dbReference type="GenomeRNAi" id="4036"/>
<dbReference type="Pharos" id="P98164">
    <property type="development level" value="Tbio"/>
</dbReference>
<dbReference type="PRO" id="PR:P98164"/>
<dbReference type="Proteomes" id="UP000005640">
    <property type="component" value="Chromosome 2"/>
</dbReference>
<dbReference type="RNAct" id="P98164">
    <property type="molecule type" value="protein"/>
</dbReference>
<dbReference type="Bgee" id="ENSG00000081479">
    <property type="expression patterns" value="Expressed in adult organism and 122 other cell types or tissues"/>
</dbReference>
<dbReference type="ExpressionAtlas" id="P98164">
    <property type="expression patterns" value="baseline and differential"/>
</dbReference>
<dbReference type="GO" id="GO:0016324">
    <property type="term" value="C:apical plasma membrane"/>
    <property type="evidence" value="ECO:0000314"/>
    <property type="project" value="UniProtKB"/>
</dbReference>
<dbReference type="GO" id="GO:0030424">
    <property type="term" value="C:axon"/>
    <property type="evidence" value="ECO:0000250"/>
    <property type="project" value="UniProtKB"/>
</dbReference>
<dbReference type="GO" id="GO:0031526">
    <property type="term" value="C:brush border membrane"/>
    <property type="evidence" value="ECO:0000250"/>
    <property type="project" value="UniProtKB"/>
</dbReference>
<dbReference type="GO" id="GO:0030669">
    <property type="term" value="C:clathrin-coated endocytic vesicle membrane"/>
    <property type="evidence" value="ECO:0000304"/>
    <property type="project" value="Reactome"/>
</dbReference>
<dbReference type="GO" id="GO:0005905">
    <property type="term" value="C:clathrin-coated pit"/>
    <property type="evidence" value="ECO:0007669"/>
    <property type="project" value="UniProtKB-KW"/>
</dbReference>
<dbReference type="GO" id="GO:0030425">
    <property type="term" value="C:dendrite"/>
    <property type="evidence" value="ECO:0000250"/>
    <property type="project" value="UniProtKB"/>
</dbReference>
<dbReference type="GO" id="GO:0005783">
    <property type="term" value="C:endoplasmic reticulum"/>
    <property type="evidence" value="ECO:0007669"/>
    <property type="project" value="Ensembl"/>
</dbReference>
<dbReference type="GO" id="GO:0031904">
    <property type="term" value="C:endosome lumen"/>
    <property type="evidence" value="ECO:0007669"/>
    <property type="project" value="UniProtKB-SubCell"/>
</dbReference>
<dbReference type="GO" id="GO:0009897">
    <property type="term" value="C:external side of plasma membrane"/>
    <property type="evidence" value="ECO:0000250"/>
    <property type="project" value="UniProtKB"/>
</dbReference>
<dbReference type="GO" id="GO:0070062">
    <property type="term" value="C:extracellular exosome"/>
    <property type="evidence" value="ECO:0007005"/>
    <property type="project" value="UniProtKB"/>
</dbReference>
<dbReference type="GO" id="GO:0005794">
    <property type="term" value="C:Golgi apparatus"/>
    <property type="evidence" value="ECO:0007669"/>
    <property type="project" value="Ensembl"/>
</dbReference>
<dbReference type="GO" id="GO:0005765">
    <property type="term" value="C:lysosomal membrane"/>
    <property type="evidence" value="ECO:0007005"/>
    <property type="project" value="UniProtKB"/>
</dbReference>
<dbReference type="GO" id="GO:0005764">
    <property type="term" value="C:lysosome"/>
    <property type="evidence" value="ECO:0000304"/>
    <property type="project" value="ProtInc"/>
</dbReference>
<dbReference type="GO" id="GO:0005886">
    <property type="term" value="C:plasma membrane"/>
    <property type="evidence" value="ECO:0000318"/>
    <property type="project" value="GO_Central"/>
</dbReference>
<dbReference type="GO" id="GO:0043235">
    <property type="term" value="C:receptor complex"/>
    <property type="evidence" value="ECO:0000314"/>
    <property type="project" value="MGI"/>
</dbReference>
<dbReference type="GO" id="GO:0005509">
    <property type="term" value="F:calcium ion binding"/>
    <property type="evidence" value="ECO:0000314"/>
    <property type="project" value="UniProtKB"/>
</dbReference>
<dbReference type="GO" id="GO:0038024">
    <property type="term" value="F:cargo receptor activity"/>
    <property type="evidence" value="ECO:0000269"/>
    <property type="project" value="Reactome"/>
</dbReference>
<dbReference type="GO" id="GO:0042562">
    <property type="term" value="F:hormone binding"/>
    <property type="evidence" value="ECO:0000318"/>
    <property type="project" value="GO_Central"/>
</dbReference>
<dbReference type="GO" id="GO:0031994">
    <property type="term" value="F:insulin-like growth factor I binding"/>
    <property type="evidence" value="ECO:0000250"/>
    <property type="project" value="ARUK-UCL"/>
</dbReference>
<dbReference type="GO" id="GO:0005041">
    <property type="term" value="F:low-density lipoprotein particle receptor activity"/>
    <property type="evidence" value="ECO:0000304"/>
    <property type="project" value="Reactome"/>
</dbReference>
<dbReference type="GO" id="GO:0140318">
    <property type="term" value="F:protein transporter activity"/>
    <property type="evidence" value="ECO:0000250"/>
    <property type="project" value="ARUK-UCL"/>
</dbReference>
<dbReference type="GO" id="GO:0051087">
    <property type="term" value="F:protein-folding chaperone binding"/>
    <property type="evidence" value="ECO:0000353"/>
    <property type="project" value="ARUK-UCL"/>
</dbReference>
<dbReference type="GO" id="GO:0017124">
    <property type="term" value="F:SH3 domain binding"/>
    <property type="evidence" value="ECO:0007669"/>
    <property type="project" value="UniProtKB-KW"/>
</dbReference>
<dbReference type="GO" id="GO:0097242">
    <property type="term" value="P:amyloid-beta clearance"/>
    <property type="evidence" value="ECO:0000250"/>
    <property type="project" value="ARUK-UCL"/>
</dbReference>
<dbReference type="GO" id="GO:0035904">
    <property type="term" value="P:aorta development"/>
    <property type="evidence" value="ECO:0007669"/>
    <property type="project" value="Ensembl"/>
</dbReference>
<dbReference type="GO" id="GO:0008283">
    <property type="term" value="P:cell population proliferation"/>
    <property type="evidence" value="ECO:0007669"/>
    <property type="project" value="Ensembl"/>
</dbReference>
<dbReference type="GO" id="GO:0071363">
    <property type="term" value="P:cellular response to growth factor stimulus"/>
    <property type="evidence" value="ECO:0000250"/>
    <property type="project" value="ARUK-UCL"/>
</dbReference>
<dbReference type="GO" id="GO:0015889">
    <property type="term" value="P:cobalamin transport"/>
    <property type="evidence" value="ECO:0000304"/>
    <property type="project" value="Reactome"/>
</dbReference>
<dbReference type="GO" id="GO:0060982">
    <property type="term" value="P:coronary artery morphogenesis"/>
    <property type="evidence" value="ECO:0000250"/>
    <property type="project" value="UniProtKB"/>
</dbReference>
<dbReference type="GO" id="GO:1904888">
    <property type="term" value="P:cranial skeletal system development"/>
    <property type="evidence" value="ECO:0007669"/>
    <property type="project" value="Ensembl"/>
</dbReference>
<dbReference type="GO" id="GO:0034311">
    <property type="term" value="P:diol metabolic process"/>
    <property type="evidence" value="ECO:0007669"/>
    <property type="project" value="Ensembl"/>
</dbReference>
<dbReference type="GO" id="GO:0006897">
    <property type="term" value="P:endocytosis"/>
    <property type="evidence" value="ECO:0000304"/>
    <property type="project" value="ProtInc"/>
</dbReference>
<dbReference type="GO" id="GO:1904447">
    <property type="term" value="P:folate import across plasma membrane"/>
    <property type="evidence" value="ECO:0000250"/>
    <property type="project" value="UniProtKB"/>
</dbReference>
<dbReference type="GO" id="GO:0030900">
    <property type="term" value="P:forebrain development"/>
    <property type="evidence" value="ECO:0007669"/>
    <property type="project" value="Ensembl"/>
</dbReference>
<dbReference type="GO" id="GO:0010467">
    <property type="term" value="P:gene expression"/>
    <property type="evidence" value="ECO:0007669"/>
    <property type="project" value="Ensembl"/>
</dbReference>
<dbReference type="GO" id="GO:0001822">
    <property type="term" value="P:kidney development"/>
    <property type="evidence" value="ECO:0007669"/>
    <property type="project" value="Ensembl"/>
</dbReference>
<dbReference type="GO" id="GO:0006629">
    <property type="term" value="P:lipid metabolic process"/>
    <property type="evidence" value="ECO:0000304"/>
    <property type="project" value="ProtInc"/>
</dbReference>
<dbReference type="GO" id="GO:0008584">
    <property type="term" value="P:male gonad development"/>
    <property type="evidence" value="ECO:0000250"/>
    <property type="project" value="UniProtKB"/>
</dbReference>
<dbReference type="GO" id="GO:0030001">
    <property type="term" value="P:metal ion transport"/>
    <property type="evidence" value="ECO:0000314"/>
    <property type="project" value="UniProtKB"/>
</dbReference>
<dbReference type="GO" id="GO:0043066">
    <property type="term" value="P:negative regulation of apoptotic process"/>
    <property type="evidence" value="ECO:0000316"/>
    <property type="project" value="ARUK-UCL"/>
</dbReference>
<dbReference type="GO" id="GO:0030514">
    <property type="term" value="P:negative regulation of BMP signaling pathway"/>
    <property type="evidence" value="ECO:0000250"/>
    <property type="project" value="UniProtKB"/>
</dbReference>
<dbReference type="GO" id="GO:0001843">
    <property type="term" value="P:neural tube closure"/>
    <property type="evidence" value="ECO:0000250"/>
    <property type="project" value="UniProtKB"/>
</dbReference>
<dbReference type="GO" id="GO:0140058">
    <property type="term" value="P:neuron projection arborization"/>
    <property type="evidence" value="ECO:0000250"/>
    <property type="project" value="UniProtKB"/>
</dbReference>
<dbReference type="GO" id="GO:0003148">
    <property type="term" value="P:outflow tract septum morphogenesis"/>
    <property type="evidence" value="ECO:0000250"/>
    <property type="project" value="UniProtKB"/>
</dbReference>
<dbReference type="GO" id="GO:0043491">
    <property type="term" value="P:phosphatidylinositol 3-kinase/protein kinase B signal transduction"/>
    <property type="evidence" value="ECO:0000316"/>
    <property type="project" value="ARUK-UCL"/>
</dbReference>
<dbReference type="GO" id="GO:1905167">
    <property type="term" value="P:positive regulation of lysosomal protein catabolic process"/>
    <property type="evidence" value="ECO:0000250"/>
    <property type="project" value="ARUK-UCL"/>
</dbReference>
<dbReference type="GO" id="GO:0050769">
    <property type="term" value="P:positive regulation of neurogenesis"/>
    <property type="evidence" value="ECO:0000250"/>
    <property type="project" value="UniProtKB"/>
</dbReference>
<dbReference type="GO" id="GO:0070447">
    <property type="term" value="P:positive regulation of oligodendrocyte progenitor proliferation"/>
    <property type="evidence" value="ECO:0000250"/>
    <property type="project" value="UniProtKB"/>
</dbReference>
<dbReference type="GO" id="GO:0015031">
    <property type="term" value="P:protein transport"/>
    <property type="evidence" value="ECO:0000314"/>
    <property type="project" value="ARUK-UCL"/>
</dbReference>
<dbReference type="GO" id="GO:0061156">
    <property type="term" value="P:pulmonary artery morphogenesis"/>
    <property type="evidence" value="ECO:0000250"/>
    <property type="project" value="UniProtKB"/>
</dbReference>
<dbReference type="GO" id="GO:0006898">
    <property type="term" value="P:receptor-mediated endocytosis"/>
    <property type="evidence" value="ECO:0000314"/>
    <property type="project" value="UniProtKB"/>
</dbReference>
<dbReference type="GO" id="GO:0044321">
    <property type="term" value="P:response to leptin"/>
    <property type="evidence" value="ECO:0000314"/>
    <property type="project" value="ARUK-UCL"/>
</dbReference>
<dbReference type="GO" id="GO:0001523">
    <property type="term" value="P:retinoid metabolic process"/>
    <property type="evidence" value="ECO:0000304"/>
    <property type="project" value="Reactome"/>
</dbReference>
<dbReference type="GO" id="GO:0003139">
    <property type="term" value="P:secondary heart field specification"/>
    <property type="evidence" value="ECO:0000250"/>
    <property type="project" value="UniProtKB"/>
</dbReference>
<dbReference type="GO" id="GO:0007605">
    <property type="term" value="P:sensory perception of sound"/>
    <property type="evidence" value="ECO:0000250"/>
    <property type="project" value="UniProtKB"/>
</dbReference>
<dbReference type="GO" id="GO:0045056">
    <property type="term" value="P:transcytosis"/>
    <property type="evidence" value="ECO:0000250"/>
    <property type="project" value="ARUK-UCL"/>
</dbReference>
<dbReference type="GO" id="GO:0150104">
    <property type="term" value="P:transport across blood-brain barrier"/>
    <property type="evidence" value="ECO:0000303"/>
    <property type="project" value="ARUK-UCL"/>
</dbReference>
<dbReference type="GO" id="GO:0060068">
    <property type="term" value="P:vagina development"/>
    <property type="evidence" value="ECO:0000250"/>
    <property type="project" value="UniProtKB"/>
</dbReference>
<dbReference type="GO" id="GO:0003223">
    <property type="term" value="P:ventricular compact myocardium morphogenesis"/>
    <property type="evidence" value="ECO:0000250"/>
    <property type="project" value="UniProtKB"/>
</dbReference>
<dbReference type="GO" id="GO:0003281">
    <property type="term" value="P:ventricular septum development"/>
    <property type="evidence" value="ECO:0007669"/>
    <property type="project" value="Ensembl"/>
</dbReference>
<dbReference type="GO" id="GO:0042359">
    <property type="term" value="P:vitamin D metabolic process"/>
    <property type="evidence" value="ECO:0000304"/>
    <property type="project" value="Reactome"/>
</dbReference>
<dbReference type="CDD" id="cd00054">
    <property type="entry name" value="EGF_CA"/>
    <property type="match status" value="3"/>
</dbReference>
<dbReference type="CDD" id="cd00112">
    <property type="entry name" value="LDLa"/>
    <property type="match status" value="34"/>
</dbReference>
<dbReference type="FunFam" id="2.120.10.30:FF:000049">
    <property type="entry name" value="LDL receptor related protein 2"/>
    <property type="match status" value="1"/>
</dbReference>
<dbReference type="FunFam" id="4.10.400.10:FF:000125">
    <property type="entry name" value="LDL receptor related protein 2"/>
    <property type="match status" value="1"/>
</dbReference>
<dbReference type="FunFam" id="4.10.400.10:FF:000133">
    <property type="entry name" value="LDL receptor related protein 2"/>
    <property type="match status" value="1"/>
</dbReference>
<dbReference type="FunFam" id="4.10.400.10:FF:000139">
    <property type="entry name" value="LDL receptor related protein 2"/>
    <property type="match status" value="1"/>
</dbReference>
<dbReference type="FunFam" id="4.10.400.10:FF:000151">
    <property type="entry name" value="LDL receptor related protein 2"/>
    <property type="match status" value="1"/>
</dbReference>
<dbReference type="FunFam" id="4.10.400.10:FF:000153">
    <property type="entry name" value="LDL receptor related protein 2"/>
    <property type="match status" value="1"/>
</dbReference>
<dbReference type="FunFam" id="4.10.400.10:FF:000157">
    <property type="entry name" value="LDL receptor related protein 2"/>
    <property type="match status" value="1"/>
</dbReference>
<dbReference type="FunFam" id="4.10.400.10:FF:000158">
    <property type="entry name" value="LDL receptor related protein 2"/>
    <property type="match status" value="1"/>
</dbReference>
<dbReference type="FunFam" id="4.10.400.10:FF:000168">
    <property type="entry name" value="LDL receptor related protein 2"/>
    <property type="match status" value="1"/>
</dbReference>
<dbReference type="FunFam" id="2.10.25.10:FF:000009">
    <property type="entry name" value="Low-density lipoprotein receptor isoform 1"/>
    <property type="match status" value="1"/>
</dbReference>
<dbReference type="FunFam" id="4.10.400.10:FF:000134">
    <property type="entry name" value="Low-density lipoprotein RecePtor related"/>
    <property type="match status" value="1"/>
</dbReference>
<dbReference type="FunFam" id="4.10.400.10:FF:000001">
    <property type="entry name" value="Low-density lipoprotein receptor-related protein 1"/>
    <property type="match status" value="3"/>
</dbReference>
<dbReference type="FunFam" id="4.10.400.10:FF:000002">
    <property type="entry name" value="Low-density lipoprotein receptor-related protein 1"/>
    <property type="match status" value="2"/>
</dbReference>
<dbReference type="FunFam" id="4.10.400.10:FF:000004">
    <property type="entry name" value="Low-density lipoprotein receptor-related protein 1"/>
    <property type="match status" value="2"/>
</dbReference>
<dbReference type="FunFam" id="4.10.400.10:FF:000009">
    <property type="entry name" value="Low-density lipoprotein receptor-related protein 1"/>
    <property type="match status" value="1"/>
</dbReference>
<dbReference type="FunFam" id="4.10.400.10:FF:000011">
    <property type="entry name" value="Low-density lipoprotein receptor-related protein 1"/>
    <property type="match status" value="1"/>
</dbReference>
<dbReference type="FunFam" id="2.10.25.10:FF:000072">
    <property type="entry name" value="Low-density lipoprotein receptor-related protein 1B"/>
    <property type="match status" value="1"/>
</dbReference>
<dbReference type="FunFam" id="4.10.400.10:FF:000005">
    <property type="entry name" value="low-density lipoprotein receptor-related protein 1B"/>
    <property type="match status" value="1"/>
</dbReference>
<dbReference type="FunFam" id="2.120.10.30:FF:000035">
    <property type="entry name" value="Low-density lipoprotein receptor-related protein 2"/>
    <property type="match status" value="1"/>
</dbReference>
<dbReference type="FunFam" id="2.120.10.30:FF:000040">
    <property type="entry name" value="Low-density lipoprotein receptor-related protein 2"/>
    <property type="match status" value="1"/>
</dbReference>
<dbReference type="FunFam" id="2.120.10.30:FF:000051">
    <property type="entry name" value="Low-density lipoprotein receptor-related protein 2"/>
    <property type="match status" value="1"/>
</dbReference>
<dbReference type="FunFam" id="2.120.10.30:FF:000056">
    <property type="entry name" value="Low-density lipoprotein receptor-related protein 2"/>
    <property type="match status" value="1"/>
</dbReference>
<dbReference type="FunFam" id="2.120.10.30:FF:000057">
    <property type="entry name" value="Low-density lipoprotein receptor-related protein 2"/>
    <property type="match status" value="1"/>
</dbReference>
<dbReference type="FunFam" id="2.120.10.30:FF:000058">
    <property type="entry name" value="Low-density lipoprotein receptor-related protein 2"/>
    <property type="match status" value="1"/>
</dbReference>
<dbReference type="FunFam" id="4.10.400.10:FF:000034">
    <property type="entry name" value="Low-density lipoprotein receptor-related protein 2"/>
    <property type="match status" value="4"/>
</dbReference>
<dbReference type="FunFam" id="4.10.400.10:FF:000045">
    <property type="entry name" value="Low-density lipoprotein receptor-related protein 2"/>
    <property type="match status" value="2"/>
</dbReference>
<dbReference type="FunFam" id="4.10.400.10:FF:000108">
    <property type="entry name" value="Low-density lipoprotein receptor-related protein 2"/>
    <property type="match status" value="1"/>
</dbReference>
<dbReference type="FunFam" id="4.10.400.10:FF:000112">
    <property type="entry name" value="Low-density lipoprotein receptor-related protein 2"/>
    <property type="match status" value="1"/>
</dbReference>
<dbReference type="FunFam" id="4.10.400.10:FF:000147">
    <property type="entry name" value="Low-density lipoprotein receptor-related protein 2"/>
    <property type="match status" value="1"/>
</dbReference>
<dbReference type="FunFam" id="4.10.400.10:FF:000154">
    <property type="entry name" value="Low-density lipoprotein receptor-related protein 2"/>
    <property type="match status" value="1"/>
</dbReference>
<dbReference type="FunFam" id="4.10.400.10:FF:000159">
    <property type="entry name" value="Low-density lipoprotein receptor-related protein 2"/>
    <property type="match status" value="1"/>
</dbReference>
<dbReference type="FunFam" id="4.10.400.10:FF:000166">
    <property type="entry name" value="Low-density lipoprotein receptor-related protein 2"/>
    <property type="match status" value="1"/>
</dbReference>
<dbReference type="FunFam" id="4.10.400.10:FF:000222">
    <property type="entry name" value="Low-density lipoprotein receptor-related protein 2"/>
    <property type="match status" value="1"/>
</dbReference>
<dbReference type="FunFam" id="4.10.400.10:FF:000078">
    <property type="entry name" value="low-density lipoprotein receptor-related protein 2"/>
    <property type="match status" value="2"/>
</dbReference>
<dbReference type="FunFam" id="4.10.400.10:FF:000121">
    <property type="entry name" value="low-density lipoprotein receptor-related protein 2"/>
    <property type="match status" value="1"/>
</dbReference>
<dbReference type="FunFam" id="2.120.10.30:FF:000008">
    <property type="entry name" value="Low-density lipoprotein receptor-related protein 4"/>
    <property type="match status" value="1"/>
</dbReference>
<dbReference type="Gene3D" id="2.10.25.10">
    <property type="entry name" value="Laminin"/>
    <property type="match status" value="7"/>
</dbReference>
<dbReference type="Gene3D" id="4.10.400.10">
    <property type="entry name" value="Low-density Lipoprotein Receptor"/>
    <property type="match status" value="36"/>
</dbReference>
<dbReference type="Gene3D" id="2.120.10.30">
    <property type="entry name" value="TolB, C-terminal domain"/>
    <property type="match status" value="8"/>
</dbReference>
<dbReference type="InterPro" id="IPR011042">
    <property type="entry name" value="6-blade_b-propeller_TolB-like"/>
</dbReference>
<dbReference type="InterPro" id="IPR026823">
    <property type="entry name" value="cEGF"/>
</dbReference>
<dbReference type="InterPro" id="IPR001881">
    <property type="entry name" value="EGF-like_Ca-bd_dom"/>
</dbReference>
<dbReference type="InterPro" id="IPR000742">
    <property type="entry name" value="EGF-like_dom"/>
</dbReference>
<dbReference type="InterPro" id="IPR000152">
    <property type="entry name" value="EGF-type_Asp/Asn_hydroxyl_site"/>
</dbReference>
<dbReference type="InterPro" id="IPR018097">
    <property type="entry name" value="EGF_Ca-bd_CS"/>
</dbReference>
<dbReference type="InterPro" id="IPR056588">
    <property type="entry name" value="EGF_LRP2"/>
</dbReference>
<dbReference type="InterPro" id="IPR009030">
    <property type="entry name" value="Growth_fac_rcpt_cys_sf"/>
</dbReference>
<dbReference type="InterPro" id="IPR036055">
    <property type="entry name" value="LDL_receptor-like_sf"/>
</dbReference>
<dbReference type="InterPro" id="IPR051221">
    <property type="entry name" value="LDLR-related"/>
</dbReference>
<dbReference type="InterPro" id="IPR023415">
    <property type="entry name" value="LDLR_class-A_CS"/>
</dbReference>
<dbReference type="InterPro" id="IPR000033">
    <property type="entry name" value="LDLR_classB_rpt"/>
</dbReference>
<dbReference type="InterPro" id="IPR002172">
    <property type="entry name" value="LDrepeatLR_classA_rpt"/>
</dbReference>
<dbReference type="InterPro" id="IPR019825">
    <property type="entry name" value="Lectin_legB_Mn/Ca_BS"/>
</dbReference>
<dbReference type="InterPro" id="IPR049883">
    <property type="entry name" value="NOTCH1_EGF-like"/>
</dbReference>
<dbReference type="PANTHER" id="PTHR22722:SF11">
    <property type="entry name" value="LOW-DENSITY LIPOPROTEIN RECEPTOR-RELATED PROTEIN 2"/>
    <property type="match status" value="1"/>
</dbReference>
<dbReference type="PANTHER" id="PTHR22722">
    <property type="entry name" value="LOW-DENSITY LIPOPROTEIN RECEPTOR-RELATED PROTEIN 2-RELATED"/>
    <property type="match status" value="1"/>
</dbReference>
<dbReference type="Pfam" id="PF12662">
    <property type="entry name" value="cEGF"/>
    <property type="match status" value="1"/>
</dbReference>
<dbReference type="Pfam" id="PF07645">
    <property type="entry name" value="EGF_CA"/>
    <property type="match status" value="2"/>
</dbReference>
<dbReference type="Pfam" id="PF24468">
    <property type="entry name" value="EGF_LRP2"/>
    <property type="match status" value="1"/>
</dbReference>
<dbReference type="Pfam" id="PF14670">
    <property type="entry name" value="FXa_inhibition"/>
    <property type="match status" value="2"/>
</dbReference>
<dbReference type="Pfam" id="PF00057">
    <property type="entry name" value="Ldl_recept_a"/>
    <property type="match status" value="34"/>
</dbReference>
<dbReference type="Pfam" id="PF00058">
    <property type="entry name" value="Ldl_recept_b"/>
    <property type="match status" value="15"/>
</dbReference>
<dbReference type="PRINTS" id="PR00261">
    <property type="entry name" value="LDLRECEPTOR"/>
</dbReference>
<dbReference type="SMART" id="SM00181">
    <property type="entry name" value="EGF"/>
    <property type="match status" value="26"/>
</dbReference>
<dbReference type="SMART" id="SM00179">
    <property type="entry name" value="EGF_CA"/>
    <property type="match status" value="10"/>
</dbReference>
<dbReference type="SMART" id="SM00192">
    <property type="entry name" value="LDLa"/>
    <property type="match status" value="36"/>
</dbReference>
<dbReference type="SMART" id="SM00135">
    <property type="entry name" value="LY"/>
    <property type="match status" value="38"/>
</dbReference>
<dbReference type="SUPFAM" id="SSF57196">
    <property type="entry name" value="EGF/Laminin"/>
    <property type="match status" value="4"/>
</dbReference>
<dbReference type="SUPFAM" id="SSF57184">
    <property type="entry name" value="Growth factor receptor domain"/>
    <property type="match status" value="2"/>
</dbReference>
<dbReference type="SUPFAM" id="SSF57424">
    <property type="entry name" value="LDL receptor-like module"/>
    <property type="match status" value="36"/>
</dbReference>
<dbReference type="SUPFAM" id="SSF63825">
    <property type="entry name" value="YWTD domain"/>
    <property type="match status" value="8"/>
</dbReference>
<dbReference type="PROSITE" id="PS00010">
    <property type="entry name" value="ASX_HYDROXYL"/>
    <property type="match status" value="4"/>
</dbReference>
<dbReference type="PROSITE" id="PS00022">
    <property type="entry name" value="EGF_1"/>
    <property type="match status" value="1"/>
</dbReference>
<dbReference type="PROSITE" id="PS01186">
    <property type="entry name" value="EGF_2"/>
    <property type="match status" value="9"/>
</dbReference>
<dbReference type="PROSITE" id="PS50026">
    <property type="entry name" value="EGF_3"/>
    <property type="match status" value="6"/>
</dbReference>
<dbReference type="PROSITE" id="PS01187">
    <property type="entry name" value="EGF_CA"/>
    <property type="match status" value="3"/>
</dbReference>
<dbReference type="PROSITE" id="PS01209">
    <property type="entry name" value="LDLRA_1"/>
    <property type="match status" value="31"/>
</dbReference>
<dbReference type="PROSITE" id="PS50068">
    <property type="entry name" value="LDLRA_2"/>
    <property type="match status" value="36"/>
</dbReference>
<dbReference type="PROSITE" id="PS51120">
    <property type="entry name" value="LDLRB"/>
    <property type="match status" value="35"/>
</dbReference>
<feature type="signal peptide" evidence="4">
    <location>
        <begin position="1"/>
        <end position="25"/>
    </location>
</feature>
<feature type="chain" id="PRO_0000017321" description="Low-density lipoprotein receptor-related protein 2">
    <location>
        <begin position="26"/>
        <end position="4655"/>
    </location>
</feature>
<feature type="topological domain" description="Extracellular" evidence="4">
    <location>
        <begin position="26"/>
        <end position="4423"/>
    </location>
</feature>
<feature type="transmembrane region" description="Helical" evidence="4">
    <location>
        <begin position="4424"/>
        <end position="4446"/>
    </location>
</feature>
<feature type="topological domain" description="Cytoplasmic" evidence="4">
    <location>
        <begin position="4447"/>
        <end position="4655"/>
    </location>
</feature>
<feature type="domain" description="LDL-receptor class A 1" evidence="6">
    <location>
        <begin position="27"/>
        <end position="63"/>
    </location>
</feature>
<feature type="domain" description="LDL-receptor class A 2" evidence="6">
    <location>
        <begin position="66"/>
        <end position="104"/>
    </location>
</feature>
<feature type="domain" description="LDL-receptor class A 3" evidence="6">
    <location>
        <begin position="107"/>
        <end position="143"/>
    </location>
</feature>
<feature type="domain" description="LDL-receptor class A 4" evidence="6">
    <location>
        <begin position="146"/>
        <end position="180"/>
    </location>
</feature>
<feature type="domain" description="LDL-receptor class A 5" evidence="6">
    <location>
        <begin position="182"/>
        <end position="218"/>
    </location>
</feature>
<feature type="domain" description="LDL-receptor class A 6" evidence="6">
    <location>
        <begin position="221"/>
        <end position="257"/>
    </location>
</feature>
<feature type="domain" description="LDL-receptor class A 7" evidence="6">
    <location>
        <begin position="265"/>
        <end position="308"/>
    </location>
</feature>
<feature type="repeat" description="LDL-receptor class B 1" evidence="7">
    <location>
        <begin position="436"/>
        <end position="478"/>
    </location>
</feature>
<feature type="repeat" description="LDL-receptor class B 2" evidence="7">
    <location>
        <begin position="479"/>
        <end position="521"/>
    </location>
</feature>
<feature type="repeat" description="LDL-receptor class B 3" evidence="7">
    <location>
        <begin position="522"/>
        <end position="568"/>
    </location>
</feature>
<feature type="repeat" description="LDL-receptor class B 4" evidence="7">
    <location>
        <begin position="569"/>
        <end position="613"/>
    </location>
</feature>
<feature type="repeat" description="LDL-receptor class B 5" evidence="7">
    <location>
        <begin position="753"/>
        <end position="795"/>
    </location>
</feature>
<feature type="repeat" description="LDL-receptor class B 6" evidence="7">
    <location>
        <begin position="796"/>
        <end position="837"/>
    </location>
</feature>
<feature type="repeat" description="LDL-receptor class B 7" evidence="7">
    <location>
        <begin position="838"/>
        <end position="881"/>
    </location>
</feature>
<feature type="repeat" description="LDL-receptor class B 8" evidence="7">
    <location>
        <begin position="882"/>
        <end position="925"/>
    </location>
</feature>
<feature type="domain" description="LDL-receptor class A 8" evidence="6">
    <location>
        <begin position="1025"/>
        <end position="1061"/>
    </location>
</feature>
<feature type="domain" description="LDL-receptor class A 9" evidence="6">
    <location>
        <begin position="1066"/>
        <end position="1102"/>
    </location>
</feature>
<feature type="domain" description="LDL-receptor class A 10" evidence="6">
    <location>
        <begin position="1108"/>
        <end position="1144"/>
    </location>
</feature>
<feature type="domain" description="LDL-receptor class A 11" evidence="6">
    <location>
        <begin position="1148"/>
        <end position="1184"/>
    </location>
</feature>
<feature type="domain" description="LDL-receptor class A 12" evidence="6">
    <location>
        <begin position="1186"/>
        <end position="1223"/>
    </location>
</feature>
<feature type="domain" description="LDL-receptor class A 13" evidence="6">
    <location>
        <begin position="1229"/>
        <end position="1267"/>
    </location>
</feature>
<feature type="domain" description="LDL-receptor class A 14" evidence="6">
    <location>
        <begin position="1270"/>
        <end position="1306"/>
    </location>
</feature>
<feature type="domain" description="LDL-receptor class A 15" evidence="6">
    <location>
        <begin position="1304"/>
        <end position="1349"/>
    </location>
</feature>
<feature type="domain" description="EGF-like 1; calcium-binding" evidence="5">
    <location>
        <begin position="1390"/>
        <end position="1429"/>
    </location>
</feature>
<feature type="repeat" description="LDL-receptor class B 9" evidence="7">
    <location>
        <begin position="1478"/>
        <end position="1520"/>
    </location>
</feature>
<feature type="repeat" description="LDL-receptor class B 10" evidence="7">
    <location>
        <begin position="1521"/>
        <end position="1563"/>
    </location>
</feature>
<feature type="repeat" description="LDL-receptor class B 11" evidence="7">
    <location>
        <begin position="1566"/>
        <end position="1609"/>
    </location>
</feature>
<feature type="repeat" description="LDL-receptor class B 12" evidence="7">
    <location>
        <begin position="1610"/>
        <end position="1654"/>
    </location>
</feature>
<feature type="repeat" description="LDL-receptor class B 13" evidence="7">
    <location>
        <begin position="1655"/>
        <end position="1695"/>
    </location>
</feature>
<feature type="domain" description="EGF-like 2" evidence="5">
    <location>
        <begin position="1700"/>
        <end position="1741"/>
    </location>
</feature>
<feature type="repeat" description="LDL-receptor class B 14" evidence="7">
    <location>
        <begin position="1790"/>
        <end position="1832"/>
    </location>
</feature>
<feature type="repeat" description="LDL-receptor class B 15" evidence="7">
    <location>
        <begin position="1833"/>
        <end position="1882"/>
    </location>
</feature>
<feature type="repeat" description="LDL-receptor class B 16" evidence="7">
    <location>
        <begin position="1883"/>
        <end position="1930"/>
    </location>
</feature>
<feature type="repeat" description="LDL-receptor class B 17" evidence="7">
    <location>
        <begin position="1931"/>
        <end position="1972"/>
    </location>
</feature>
<feature type="repeat" description="LDL-receptor class B 18" evidence="7">
    <location>
        <begin position="1973"/>
        <end position="2013"/>
    </location>
</feature>
<feature type="repeat" description="LDL-receptor class B 19" evidence="7">
    <location>
        <begin position="2107"/>
        <end position="2156"/>
    </location>
</feature>
<feature type="repeat" description="LDL-receptor class B 20" evidence="7">
    <location>
        <begin position="2157"/>
        <end position="2201"/>
    </location>
</feature>
<feature type="repeat" description="LDL-receptor class B 21" evidence="7">
    <location>
        <begin position="2202"/>
        <end position="2245"/>
    </location>
</feature>
<feature type="repeat" description="LDL-receptor class B 22" evidence="7">
    <location>
        <begin position="2246"/>
        <end position="2289"/>
    </location>
</feature>
<feature type="repeat" description="LDL-receptor class B 23" evidence="7">
    <location>
        <begin position="2431"/>
        <end position="2477"/>
    </location>
</feature>
<feature type="repeat" description="LDL-receptor class B 24" evidence="7">
    <location>
        <begin position="2478"/>
        <end position="2518"/>
    </location>
</feature>
<feature type="repeat" description="LDL-receptor class B 25" evidence="7">
    <location>
        <begin position="2519"/>
        <end position="2562"/>
    </location>
</feature>
<feature type="repeat" description="LDL-receptor class B 26" evidence="7">
    <location>
        <begin position="2563"/>
        <end position="2604"/>
    </location>
</feature>
<feature type="repeat" description="LDL-receptor class B 27" evidence="7">
    <location>
        <begin position="2605"/>
        <end position="2646"/>
    </location>
</feature>
<feature type="domain" description="LDL-receptor class A 16" evidence="6">
    <location>
        <begin position="2699"/>
        <end position="2737"/>
    </location>
</feature>
<feature type="domain" description="LDL-receptor class A 17" evidence="6">
    <location>
        <begin position="2740"/>
        <end position="2776"/>
    </location>
</feature>
<feature type="domain" description="LDL-receptor class A 18" evidence="6">
    <location>
        <begin position="2779"/>
        <end position="2818"/>
    </location>
</feature>
<feature type="domain" description="LDL-receptor class A 19" evidence="6">
    <location>
        <begin position="2821"/>
        <end position="2860"/>
    </location>
</feature>
<feature type="domain" description="LDL-receptor class A 20" evidence="6">
    <location>
        <begin position="2863"/>
        <end position="2900"/>
    </location>
</feature>
<feature type="domain" description="LDL-receptor class A 21" evidence="6">
    <location>
        <begin position="2905"/>
        <end position="2944"/>
    </location>
</feature>
<feature type="domain" description="LDL-receptor class A 22" evidence="6">
    <location>
        <begin position="2947"/>
        <end position="2989"/>
    </location>
</feature>
<feature type="domain" description="LDL-receptor class A 23" evidence="6">
    <location>
        <begin position="2992"/>
        <end position="3028"/>
    </location>
</feature>
<feature type="domain" description="LDL-receptor class A 24" evidence="6">
    <location>
        <begin position="3031"/>
        <end position="3069"/>
    </location>
</feature>
<feature type="domain" description="LDL-receptor class A 25" evidence="6">
    <location>
        <begin position="3074"/>
        <end position="3110"/>
    </location>
</feature>
<feature type="domain" description="EGF-like 3" evidence="5">
    <location>
        <begin position="3110"/>
        <end position="3151"/>
    </location>
</feature>
<feature type="domain" description="EGF-like 4; calcium-binding" evidence="5">
    <location>
        <begin position="3152"/>
        <end position="3192"/>
    </location>
</feature>
<feature type="repeat" description="LDL-receptor class B 28" evidence="7">
    <location>
        <begin position="3239"/>
        <end position="3281"/>
    </location>
</feature>
<feature type="repeat" description="LDL-receptor class B 29" evidence="7">
    <location>
        <begin position="3282"/>
        <end position="3324"/>
    </location>
</feature>
<feature type="repeat" description="LDL-receptor class B 30" evidence="7">
    <location>
        <begin position="3333"/>
        <end position="3376"/>
    </location>
</feature>
<feature type="repeat" description="LDL-receptor class B 31" evidence="7">
    <location>
        <begin position="3377"/>
        <end position="3419"/>
    </location>
</feature>
<feature type="repeat" description="LDL-receptor class B 32" evidence="7">
    <location>
        <begin position="3420"/>
        <end position="3460"/>
    </location>
</feature>
<feature type="domain" description="LDL-receptor class A 26" evidence="6">
    <location>
        <begin position="3511"/>
        <end position="3549"/>
    </location>
</feature>
<feature type="domain" description="LDL-receptor class A 27" evidence="6">
    <location>
        <begin position="3552"/>
        <end position="3590"/>
    </location>
</feature>
<feature type="domain" description="LDL-receptor class A 28" evidence="6">
    <location>
        <begin position="3593"/>
        <end position="3631"/>
    </location>
</feature>
<feature type="domain" description="LDL-receptor class A 29" evidence="6">
    <location>
        <begin position="3634"/>
        <end position="3672"/>
    </location>
</feature>
<feature type="domain" description="LDL-receptor class A 30" evidence="6">
    <location>
        <begin position="3677"/>
        <end position="3715"/>
    </location>
</feature>
<feature type="domain" description="LDL-receptor class A 31" evidence="6">
    <location>
        <begin position="3718"/>
        <end position="3755"/>
    </location>
</feature>
<feature type="domain" description="LDL-receptor class A 32" evidence="6">
    <location>
        <begin position="3758"/>
        <end position="3794"/>
    </location>
</feature>
<feature type="domain" description="LDL-receptor class A 33" evidence="6">
    <location>
        <begin position="3797"/>
        <end position="3833"/>
    </location>
</feature>
<feature type="domain" description="LDL-receptor class A 34" evidence="6">
    <location>
        <begin position="3841"/>
        <end position="3879"/>
    </location>
</feature>
<feature type="domain" description="LDL-receptor class A 35" evidence="6">
    <location>
        <begin position="3882"/>
        <end position="3921"/>
    </location>
</feature>
<feature type="domain" description="LDL-receptor class A 36" evidence="6">
    <location>
        <begin position="3927"/>
        <end position="3963"/>
    </location>
</feature>
<feature type="domain" description="EGF-like 5; calcium-binding" evidence="5">
    <location>
        <begin position="4007"/>
        <end position="4048"/>
    </location>
</feature>
<feature type="repeat" description="LDL-receptor class B 33" evidence="7">
    <location>
        <begin position="4154"/>
        <end position="4196"/>
    </location>
</feature>
<feature type="repeat" description="LDL-receptor class B 34" evidence="7">
    <location>
        <begin position="4197"/>
        <end position="4240"/>
    </location>
</feature>
<feature type="repeat" description="LDL-receptor class B 35" evidence="7">
    <location>
        <begin position="4242"/>
        <end position="4283"/>
    </location>
</feature>
<feature type="domain" description="EGF-like 6" evidence="5">
    <location>
        <begin position="4377"/>
        <end position="4411"/>
    </location>
</feature>
<feature type="region of interest" description="Disordered" evidence="8">
    <location>
        <begin position="4550"/>
        <end position="4574"/>
    </location>
</feature>
<feature type="region of interest" description="Interaction with DAB2" evidence="9">
    <location>
        <begin position="4589"/>
        <end position="4602"/>
    </location>
</feature>
<feature type="region of interest" description="Disordered" evidence="8">
    <location>
        <begin position="4601"/>
        <end position="4655"/>
    </location>
</feature>
<feature type="short sequence motif" description="SH3-binding" evidence="4">
    <location>
        <begin position="4453"/>
        <end position="4462"/>
    </location>
</feature>
<feature type="short sequence motif" description="PxLPxI/L motif 1; mediates interaction with ANKRA2" evidence="3">
    <location>
        <begin position="4456"/>
        <end position="4461"/>
    </location>
</feature>
<feature type="short sequence motif" description="PxLPxI/L motif 2; mediates interaction with ANKRA2" evidence="3">
    <location>
        <begin position="4459"/>
        <end position="4464"/>
    </location>
</feature>
<feature type="short sequence motif" description="Endocytosis signal" evidence="4">
    <location>
        <begin position="4521"/>
        <end position="4526"/>
    </location>
</feature>
<feature type="short sequence motif" description="NPXY motif">
    <location>
        <begin position="4595"/>
        <end position="4598"/>
    </location>
</feature>
<feature type="short sequence motif" description="SH2-binding" evidence="4">
    <location>
        <begin position="4598"/>
        <end position="4601"/>
    </location>
</feature>
<feature type="short sequence motif" description="SH3-binding" evidence="4">
    <location>
        <begin position="4611"/>
        <end position="4622"/>
    </location>
</feature>
<feature type="compositionally biased region" description="Polar residues" evidence="8">
    <location>
        <begin position="4565"/>
        <end position="4574"/>
    </location>
</feature>
<feature type="compositionally biased region" description="Pro residues" evidence="8">
    <location>
        <begin position="4612"/>
        <end position="4624"/>
    </location>
</feature>
<feature type="binding site" evidence="20 30">
    <location>
        <position position="1126"/>
    </location>
    <ligand>
        <name>Ca(2+)</name>
        <dbReference type="ChEBI" id="CHEBI:29108"/>
    </ligand>
</feature>
<feature type="binding site" evidence="20 30">
    <location>
        <position position="1129"/>
    </location>
    <ligand>
        <name>Ca(2+)</name>
        <dbReference type="ChEBI" id="CHEBI:29108"/>
    </ligand>
</feature>
<feature type="binding site" evidence="20 30">
    <location>
        <position position="1131"/>
    </location>
    <ligand>
        <name>Ca(2+)</name>
        <dbReference type="ChEBI" id="CHEBI:29108"/>
    </ligand>
</feature>
<feature type="binding site" evidence="20 30">
    <location>
        <position position="1133"/>
    </location>
    <ligand>
        <name>Ca(2+)</name>
        <dbReference type="ChEBI" id="CHEBI:29108"/>
    </ligand>
</feature>
<feature type="binding site" evidence="20 30">
    <location>
        <position position="1139"/>
    </location>
    <ligand>
        <name>Ca(2+)</name>
        <dbReference type="ChEBI" id="CHEBI:29108"/>
    </ligand>
</feature>
<feature type="binding site" evidence="20 30">
    <location>
        <position position="1140"/>
    </location>
    <ligand>
        <name>Ca(2+)</name>
        <dbReference type="ChEBI" id="CHEBI:29108"/>
    </ligand>
</feature>
<feature type="binding site" evidence="3">
    <location>
        <position position="1208"/>
    </location>
    <ligand>
        <name>Ca(2+)</name>
        <dbReference type="ChEBI" id="CHEBI:29108"/>
    </ligand>
</feature>
<feature type="binding site" evidence="3">
    <location>
        <position position="1210"/>
    </location>
    <ligand>
        <name>Ca(2+)</name>
        <dbReference type="ChEBI" id="CHEBI:29108"/>
    </ligand>
</feature>
<feature type="binding site" evidence="3">
    <location>
        <position position="1212"/>
    </location>
    <ligand>
        <name>Ca(2+)</name>
        <dbReference type="ChEBI" id="CHEBI:29108"/>
    </ligand>
</feature>
<feature type="binding site" evidence="3">
    <location>
        <position position="1218"/>
    </location>
    <ligand>
        <name>Ca(2+)</name>
        <dbReference type="ChEBI" id="CHEBI:29108"/>
    </ligand>
</feature>
<feature type="binding site" evidence="3">
    <location>
        <position position="1219"/>
    </location>
    <ligand>
        <name>Ca(2+)</name>
        <dbReference type="ChEBI" id="CHEBI:29108"/>
    </ligand>
</feature>
<feature type="modified residue" description="Phosphoserine" evidence="1">
    <location>
        <position position="4463"/>
    </location>
</feature>
<feature type="modified residue" description="Phosphoserine" evidence="1">
    <location>
        <position position="4466"/>
    </location>
</feature>
<feature type="modified residue" description="Phosphoserine" evidence="1">
    <location>
        <position position="4569"/>
    </location>
</feature>
<feature type="modified residue" description="Phosphoserine" evidence="3">
    <location>
        <position position="4616"/>
    </location>
</feature>
<feature type="modified residue" description="Phosphothreonine" evidence="1">
    <location>
        <position position="4632"/>
    </location>
</feature>
<feature type="modified residue" description="Phosphoserine" evidence="1">
    <location>
        <position position="4653"/>
    </location>
</feature>
<feature type="glycosylation site" description="N-linked (GlcNAc...) asparagine" evidence="4">
    <location>
        <position position="159"/>
    </location>
</feature>
<feature type="glycosylation site" description="N-linked (GlcNAc...) asparagine" evidence="4">
    <location>
        <position position="178"/>
    </location>
</feature>
<feature type="glycosylation site" description="N-linked (GlcNAc...) asparagine" evidence="4">
    <location>
        <position position="299"/>
    </location>
</feature>
<feature type="glycosylation site" description="N-linked (GlcNAc...) asparagine" evidence="4">
    <location>
        <position position="300"/>
    </location>
</feature>
<feature type="glycosylation site" description="N-linked (GlcNAc...) asparagine" evidence="4">
    <location>
        <position position="341"/>
    </location>
</feature>
<feature type="glycosylation site" description="N-linked (GlcNAc...) asparagine" evidence="4">
    <location>
        <position position="388"/>
    </location>
</feature>
<feature type="glycosylation site" description="N-linked (GlcNAc...) asparagine" evidence="4">
    <location>
        <position position="463"/>
    </location>
</feature>
<feature type="glycosylation site" description="N-linked (GlcNAc...) asparagine" evidence="4">
    <location>
        <position position="866"/>
    </location>
</feature>
<feature type="glycosylation site" description="N-linked (GlcNAc...) asparagine" evidence="4">
    <location>
        <position position="1064"/>
    </location>
</feature>
<feature type="glycosylation site" description="N-linked (GlcNAc...) asparagine" evidence="4">
    <location>
        <position position="1144"/>
    </location>
</feature>
<feature type="glycosylation site" description="N-linked (GlcNAc...) asparagine" evidence="4">
    <location>
        <position position="1186"/>
    </location>
</feature>
<feature type="glycosylation site" description="N-linked (GlcNAc...) asparagine" evidence="4">
    <location>
        <position position="1327"/>
    </location>
</feature>
<feature type="glycosylation site" description="N-linked (GlcNAc...) asparagine" evidence="4">
    <location>
        <position position="1340"/>
    </location>
</feature>
<feature type="glycosylation site" description="N-linked (GlcNAc...) asparagine" evidence="4">
    <location>
        <position position="1383"/>
    </location>
</feature>
<feature type="glycosylation site" description="N-linked (GlcNAc...) asparagine" evidence="4">
    <location>
        <position position="1464"/>
    </location>
</feature>
<feature type="glycosylation site" description="N-linked (GlcNAc...) asparagine" evidence="4">
    <location>
        <position position="1496"/>
    </location>
</feature>
<feature type="glycosylation site" description="N-linked (GlcNAc...) asparagine" evidence="4">
    <location>
        <position position="1550"/>
    </location>
</feature>
<feature type="glycosylation site" description="N-linked (GlcNAc...) asparagine" evidence="4">
    <location>
        <position position="1675"/>
    </location>
</feature>
<feature type="glycosylation site" description="N-linked (GlcNAc...) asparagine" evidence="4">
    <location>
        <position position="1810"/>
    </location>
</feature>
<feature type="glycosylation site" description="N-linked (GlcNAc...) asparagine" evidence="4">
    <location>
        <position position="2055"/>
    </location>
</feature>
<feature type="glycosylation site" description="N-linked (GlcNAc...) asparagine" evidence="4">
    <location>
        <position position="2177"/>
    </location>
</feature>
<feature type="glycosylation site" description="N-linked (GlcNAc...) asparagine" evidence="4">
    <location>
        <position position="2224"/>
    </location>
</feature>
<feature type="glycosylation site" description="N-linked (GlcNAc...) asparagine" evidence="4">
    <location>
        <position position="2499"/>
    </location>
</feature>
<feature type="glycosylation site" description="N-linked (GlcNAc...) asparagine" evidence="4">
    <location>
        <position position="2547"/>
    </location>
</feature>
<feature type="glycosylation site" description="N-linked (GlcNAc...) asparagine" evidence="4">
    <location>
        <position position="2781"/>
    </location>
</feature>
<feature type="glycosylation site" description="N-linked (GlcNAc...) asparagine" evidence="4">
    <location>
        <position position="2809"/>
    </location>
</feature>
<feature type="glycosylation site" description="N-linked (GlcNAc...) asparagine" evidence="4">
    <location>
        <position position="2810"/>
    </location>
</feature>
<feature type="glycosylation site" description="N-linked (GlcNAc...) asparagine" evidence="4">
    <location>
        <position position="2947"/>
    </location>
</feature>
<feature type="glycosylation site" description="N-linked (GlcNAc...) asparagine" evidence="4">
    <location>
        <position position="2987"/>
    </location>
</feature>
<feature type="glycosylation site" description="N-linked (GlcNAc...) asparagine" evidence="4">
    <location>
        <position position="3125"/>
    </location>
</feature>
<feature type="glycosylation site" description="N-linked (GlcNAc...) asparagine" evidence="4">
    <location>
        <position position="3211"/>
    </location>
</feature>
<feature type="glycosylation site" description="N-linked (GlcNAc...) asparagine" evidence="4">
    <location>
        <position position="3257"/>
    </location>
</feature>
<feature type="glycosylation site" description="N-linked (GlcNAc...) asparagine" evidence="4">
    <location>
        <position position="3315"/>
    </location>
</feature>
<feature type="glycosylation site" description="N-linked (GlcNAc...) asparagine" evidence="4">
    <location>
        <position position="3355"/>
    </location>
</feature>
<feature type="glycosylation site" description="N-linked (GlcNAc...) asparagine" evidence="4">
    <location>
        <position position="3446"/>
    </location>
</feature>
<feature type="glycosylation site" description="N-linked (GlcNAc...) asparagine" evidence="4">
    <location>
        <position position="3564"/>
    </location>
</feature>
<feature type="glycosylation site" description="N-linked (GlcNAc...) asparagine" evidence="4">
    <location>
        <position position="3680"/>
    </location>
</feature>
<feature type="glycosylation site" description="N-linked (GlcNAc...) asparagine" evidence="4">
    <location>
        <position position="3978"/>
    </location>
</feature>
<feature type="glycosylation site" description="N-linked (GlcNAc...) asparagine" evidence="4">
    <location>
        <position position="4068"/>
    </location>
</feature>
<feature type="glycosylation site" description="N-linked (GlcNAc...) asparagine" evidence="4">
    <location>
        <position position="4327"/>
    </location>
</feature>
<feature type="disulfide bond" evidence="6">
    <location>
        <begin position="28"/>
        <end position="40"/>
    </location>
</feature>
<feature type="disulfide bond" evidence="6">
    <location>
        <begin position="35"/>
        <end position="53"/>
    </location>
</feature>
<feature type="disulfide bond" evidence="6">
    <location>
        <begin position="47"/>
        <end position="62"/>
    </location>
</feature>
<feature type="disulfide bond" evidence="6">
    <location>
        <begin position="67"/>
        <end position="80"/>
    </location>
</feature>
<feature type="disulfide bond" evidence="6">
    <location>
        <begin position="74"/>
        <end position="93"/>
    </location>
</feature>
<feature type="disulfide bond" evidence="6">
    <location>
        <begin position="87"/>
        <end position="103"/>
    </location>
</feature>
<feature type="disulfide bond" evidence="6">
    <location>
        <begin position="108"/>
        <end position="120"/>
    </location>
</feature>
<feature type="disulfide bond" evidence="6">
    <location>
        <begin position="115"/>
        <end position="133"/>
    </location>
</feature>
<feature type="disulfide bond" evidence="6">
    <location>
        <begin position="127"/>
        <end position="142"/>
    </location>
</feature>
<feature type="disulfide bond" evidence="6">
    <location>
        <begin position="147"/>
        <end position="157"/>
    </location>
</feature>
<feature type="disulfide bond" evidence="6">
    <location>
        <begin position="152"/>
        <end position="170"/>
    </location>
</feature>
<feature type="disulfide bond" evidence="6">
    <location>
        <begin position="164"/>
        <end position="179"/>
    </location>
</feature>
<feature type="disulfide bond" evidence="6">
    <location>
        <begin position="183"/>
        <end position="195"/>
    </location>
</feature>
<feature type="disulfide bond" evidence="6">
    <location>
        <begin position="190"/>
        <end position="208"/>
    </location>
</feature>
<feature type="disulfide bond" evidence="6">
    <location>
        <begin position="202"/>
        <end position="217"/>
    </location>
</feature>
<feature type="disulfide bond" evidence="6">
    <location>
        <begin position="222"/>
        <end position="234"/>
    </location>
</feature>
<feature type="disulfide bond" evidence="6">
    <location>
        <begin position="229"/>
        <end position="247"/>
    </location>
</feature>
<feature type="disulfide bond" evidence="6">
    <location>
        <begin position="241"/>
        <end position="256"/>
    </location>
</feature>
<feature type="disulfide bond" evidence="6">
    <location>
        <begin position="266"/>
        <end position="279"/>
    </location>
</feature>
<feature type="disulfide bond" evidence="6">
    <location>
        <begin position="273"/>
        <end position="292"/>
    </location>
</feature>
<feature type="disulfide bond" evidence="6">
    <location>
        <begin position="286"/>
        <end position="307"/>
    </location>
</feature>
<feature type="disulfide bond" evidence="6">
    <location>
        <begin position="1026"/>
        <end position="1038"/>
    </location>
</feature>
<feature type="disulfide bond" evidence="6">
    <location>
        <begin position="1033"/>
        <end position="1051"/>
    </location>
</feature>
<feature type="disulfide bond" evidence="6">
    <location>
        <begin position="1045"/>
        <end position="1060"/>
    </location>
</feature>
<feature type="disulfide bond" evidence="6">
    <location>
        <begin position="1067"/>
        <end position="1079"/>
    </location>
</feature>
<feature type="disulfide bond" evidence="6">
    <location>
        <begin position="1074"/>
        <end position="1092"/>
    </location>
</feature>
<feature type="disulfide bond" evidence="6">
    <location>
        <begin position="1086"/>
        <end position="1101"/>
    </location>
</feature>
<feature type="disulfide bond" evidence="6 20">
    <location>
        <begin position="1109"/>
        <end position="1121"/>
    </location>
</feature>
<feature type="disulfide bond" evidence="6 20">
    <location>
        <begin position="1116"/>
        <end position="1134"/>
    </location>
</feature>
<feature type="disulfide bond" evidence="6 20">
    <location>
        <begin position="1128"/>
        <end position="1143"/>
    </location>
</feature>
<feature type="disulfide bond" evidence="6">
    <location>
        <begin position="1149"/>
        <end position="1161"/>
    </location>
</feature>
<feature type="disulfide bond" evidence="6">
    <location>
        <begin position="1156"/>
        <end position="1174"/>
    </location>
</feature>
<feature type="disulfide bond" evidence="6">
    <location>
        <begin position="1168"/>
        <end position="1183"/>
    </location>
</feature>
<feature type="disulfide bond" evidence="6">
    <location>
        <begin position="1187"/>
        <end position="1200"/>
    </location>
</feature>
<feature type="disulfide bond" evidence="6">
    <location>
        <begin position="1194"/>
        <end position="1213"/>
    </location>
</feature>
<feature type="disulfide bond" evidence="6">
    <location>
        <begin position="1207"/>
        <end position="1222"/>
    </location>
</feature>
<feature type="disulfide bond" evidence="6">
    <location>
        <begin position="1230"/>
        <end position="1243"/>
    </location>
</feature>
<feature type="disulfide bond" evidence="6">
    <location>
        <begin position="1237"/>
        <end position="1256"/>
    </location>
</feature>
<feature type="disulfide bond" evidence="6">
    <location>
        <begin position="1250"/>
        <end position="1266"/>
    </location>
</feature>
<feature type="disulfide bond" evidence="6">
    <location>
        <begin position="1271"/>
        <end position="1283"/>
    </location>
</feature>
<feature type="disulfide bond" evidence="6">
    <location>
        <begin position="1278"/>
        <end position="1296"/>
    </location>
</feature>
<feature type="disulfide bond" evidence="6">
    <location>
        <begin position="1290"/>
        <end position="1305"/>
    </location>
</feature>
<feature type="disulfide bond" evidence="6">
    <location>
        <begin position="1305"/>
        <end position="1325"/>
    </location>
</feature>
<feature type="disulfide bond" evidence="6">
    <location>
        <begin position="1312"/>
        <end position="1338"/>
    </location>
</feature>
<feature type="disulfide bond" evidence="6">
    <location>
        <begin position="1332"/>
        <end position="1348"/>
    </location>
</feature>
<feature type="disulfide bond" evidence="5">
    <location>
        <begin position="1394"/>
        <end position="1404"/>
    </location>
</feature>
<feature type="disulfide bond" evidence="5">
    <location>
        <begin position="1400"/>
        <end position="1413"/>
    </location>
</feature>
<feature type="disulfide bond" evidence="5">
    <location>
        <begin position="1415"/>
        <end position="1428"/>
    </location>
</feature>
<feature type="disulfide bond" evidence="5">
    <location>
        <begin position="1704"/>
        <end position="1713"/>
    </location>
</feature>
<feature type="disulfide bond" evidence="5">
    <location>
        <begin position="1709"/>
        <end position="1725"/>
    </location>
</feature>
<feature type="disulfide bond" evidence="5">
    <location>
        <begin position="1727"/>
        <end position="1740"/>
    </location>
</feature>
<feature type="disulfide bond" evidence="6">
    <location>
        <begin position="2700"/>
        <end position="2712"/>
    </location>
</feature>
<feature type="disulfide bond" evidence="6">
    <location>
        <begin position="2707"/>
        <end position="2725"/>
    </location>
</feature>
<feature type="disulfide bond" evidence="6">
    <location>
        <begin position="2719"/>
        <end position="2736"/>
    </location>
</feature>
<feature type="disulfide bond" evidence="6">
    <location>
        <begin position="2741"/>
        <end position="2753"/>
    </location>
</feature>
<feature type="disulfide bond" evidence="6">
    <location>
        <begin position="2748"/>
        <end position="2766"/>
    </location>
</feature>
<feature type="disulfide bond" evidence="6">
    <location>
        <begin position="2760"/>
        <end position="2775"/>
    </location>
</feature>
<feature type="disulfide bond" evidence="6">
    <location>
        <begin position="2780"/>
        <end position="2793"/>
    </location>
</feature>
<feature type="disulfide bond" evidence="6">
    <location>
        <begin position="2788"/>
        <end position="2806"/>
    </location>
</feature>
<feature type="disulfide bond" evidence="6">
    <location>
        <begin position="2800"/>
        <end position="2817"/>
    </location>
</feature>
<feature type="disulfide bond" evidence="6">
    <location>
        <begin position="2822"/>
        <end position="2835"/>
    </location>
</feature>
<feature type="disulfide bond" evidence="6">
    <location>
        <begin position="2829"/>
        <end position="2848"/>
    </location>
</feature>
<feature type="disulfide bond" evidence="6">
    <location>
        <begin position="2842"/>
        <end position="2859"/>
    </location>
</feature>
<feature type="disulfide bond" evidence="6">
    <location>
        <begin position="2864"/>
        <end position="2876"/>
    </location>
</feature>
<feature type="disulfide bond" evidence="6">
    <location>
        <begin position="2871"/>
        <end position="2889"/>
    </location>
</feature>
<feature type="disulfide bond" evidence="6">
    <location>
        <begin position="2883"/>
        <end position="2899"/>
    </location>
</feature>
<feature type="disulfide bond" evidence="6">
    <location>
        <begin position="2906"/>
        <end position="2918"/>
    </location>
</feature>
<feature type="disulfide bond" evidence="6">
    <location>
        <begin position="2913"/>
        <end position="2931"/>
    </location>
</feature>
<feature type="disulfide bond" evidence="6">
    <location>
        <begin position="2925"/>
        <end position="2943"/>
    </location>
</feature>
<feature type="disulfide bond" evidence="6">
    <location>
        <begin position="2948"/>
        <end position="2965"/>
    </location>
</feature>
<feature type="disulfide bond" evidence="6">
    <location>
        <begin position="2955"/>
        <end position="2978"/>
    </location>
</feature>
<feature type="disulfide bond" evidence="6">
    <location>
        <begin position="2972"/>
        <end position="2988"/>
    </location>
</feature>
<feature type="disulfide bond" evidence="6">
    <location>
        <begin position="2993"/>
        <end position="3005"/>
    </location>
</feature>
<feature type="disulfide bond" evidence="6">
    <location>
        <begin position="3000"/>
        <end position="3018"/>
    </location>
</feature>
<feature type="disulfide bond" evidence="6">
    <location>
        <begin position="3012"/>
        <end position="3027"/>
    </location>
</feature>
<feature type="disulfide bond" evidence="6">
    <location>
        <begin position="3032"/>
        <end position="3044"/>
    </location>
</feature>
<feature type="disulfide bond" evidence="6">
    <location>
        <begin position="3039"/>
        <end position="3057"/>
    </location>
</feature>
<feature type="disulfide bond" evidence="6">
    <location>
        <begin position="3051"/>
        <end position="3068"/>
    </location>
</feature>
<feature type="disulfide bond" evidence="6">
    <location>
        <begin position="3075"/>
        <end position="3087"/>
    </location>
</feature>
<feature type="disulfide bond" evidence="6">
    <location>
        <begin position="3082"/>
        <end position="3100"/>
    </location>
</feature>
<feature type="disulfide bond" evidence="6">
    <location>
        <begin position="3094"/>
        <end position="3109"/>
    </location>
</feature>
<feature type="disulfide bond" evidence="5">
    <location>
        <begin position="3114"/>
        <end position="3126"/>
    </location>
</feature>
<feature type="disulfide bond" evidence="5">
    <location>
        <begin position="3122"/>
        <end position="3135"/>
    </location>
</feature>
<feature type="disulfide bond" evidence="5">
    <location>
        <begin position="3137"/>
        <end position="3150"/>
    </location>
</feature>
<feature type="disulfide bond" evidence="5">
    <location>
        <begin position="3156"/>
        <end position="3167"/>
    </location>
</feature>
<feature type="disulfide bond" evidence="5">
    <location>
        <begin position="3163"/>
        <end position="3176"/>
    </location>
</feature>
<feature type="disulfide bond" evidence="5">
    <location>
        <begin position="3178"/>
        <end position="3191"/>
    </location>
</feature>
<feature type="disulfide bond" evidence="6">
    <location>
        <begin position="3512"/>
        <end position="3525"/>
    </location>
</feature>
<feature type="disulfide bond" evidence="6">
    <location>
        <begin position="3519"/>
        <end position="3538"/>
    </location>
</feature>
<feature type="disulfide bond" evidence="6">
    <location>
        <begin position="3532"/>
        <end position="3548"/>
    </location>
</feature>
<feature type="disulfide bond" evidence="6">
    <location>
        <begin position="3553"/>
        <end position="3565"/>
    </location>
</feature>
<feature type="disulfide bond" evidence="6">
    <location>
        <begin position="3560"/>
        <end position="3578"/>
    </location>
</feature>
<feature type="disulfide bond" evidence="6">
    <location>
        <begin position="3572"/>
        <end position="3589"/>
    </location>
</feature>
<feature type="disulfide bond" evidence="6">
    <location>
        <begin position="3594"/>
        <end position="3606"/>
    </location>
</feature>
<feature type="disulfide bond" evidence="6">
    <location>
        <begin position="3601"/>
        <end position="3619"/>
    </location>
</feature>
<feature type="disulfide bond" evidence="6">
    <location>
        <begin position="3613"/>
        <end position="3630"/>
    </location>
</feature>
<feature type="disulfide bond" evidence="6">
    <location>
        <begin position="3635"/>
        <end position="3647"/>
    </location>
</feature>
<feature type="disulfide bond" evidence="6">
    <location>
        <begin position="3642"/>
        <end position="3660"/>
    </location>
</feature>
<feature type="disulfide bond" evidence="6">
    <location>
        <begin position="3654"/>
        <end position="3671"/>
    </location>
</feature>
<feature type="disulfide bond" evidence="6">
    <location>
        <begin position="3678"/>
        <end position="3692"/>
    </location>
</feature>
<feature type="disulfide bond" evidence="6">
    <location>
        <begin position="3686"/>
        <end position="3705"/>
    </location>
</feature>
<feature type="disulfide bond" evidence="6">
    <location>
        <begin position="3699"/>
        <end position="3714"/>
    </location>
</feature>
<feature type="disulfide bond" evidence="6">
    <location>
        <begin position="3719"/>
        <end position="3732"/>
    </location>
</feature>
<feature type="disulfide bond" evidence="6">
    <location>
        <begin position="3727"/>
        <end position="3745"/>
    </location>
</feature>
<feature type="disulfide bond" evidence="6">
    <location>
        <begin position="3739"/>
        <end position="3754"/>
    </location>
</feature>
<feature type="disulfide bond" evidence="6">
    <location>
        <begin position="3759"/>
        <end position="3771"/>
    </location>
</feature>
<feature type="disulfide bond" evidence="6">
    <location>
        <begin position="3766"/>
        <end position="3784"/>
    </location>
</feature>
<feature type="disulfide bond" evidence="6">
    <location>
        <begin position="3778"/>
        <end position="3793"/>
    </location>
</feature>
<feature type="disulfide bond" evidence="6">
    <location>
        <begin position="3798"/>
        <end position="3810"/>
    </location>
</feature>
<feature type="disulfide bond" evidence="6">
    <location>
        <begin position="3805"/>
        <end position="3823"/>
    </location>
</feature>
<feature type="disulfide bond" evidence="6">
    <location>
        <begin position="3817"/>
        <end position="3832"/>
    </location>
</feature>
<feature type="disulfide bond" evidence="6">
    <location>
        <begin position="3842"/>
        <end position="3854"/>
    </location>
</feature>
<feature type="disulfide bond" evidence="6">
    <location>
        <begin position="3849"/>
        <end position="3867"/>
    </location>
</feature>
<feature type="disulfide bond" evidence="6">
    <location>
        <begin position="3861"/>
        <end position="3878"/>
    </location>
</feature>
<feature type="disulfide bond" evidence="6">
    <location>
        <begin position="3883"/>
        <end position="3896"/>
    </location>
</feature>
<feature type="disulfide bond" evidence="6">
    <location>
        <begin position="3891"/>
        <end position="3909"/>
    </location>
</feature>
<feature type="disulfide bond" evidence="6">
    <location>
        <begin position="3903"/>
        <end position="3920"/>
    </location>
</feature>
<feature type="disulfide bond" evidence="6">
    <location>
        <begin position="3928"/>
        <end position="3940"/>
    </location>
</feature>
<feature type="disulfide bond" evidence="6">
    <location>
        <begin position="3935"/>
        <end position="3953"/>
    </location>
</feature>
<feature type="disulfide bond" evidence="6">
    <location>
        <begin position="3947"/>
        <end position="3962"/>
    </location>
</feature>
<feature type="disulfide bond" evidence="5">
    <location>
        <begin position="4011"/>
        <end position="4021"/>
    </location>
</feature>
<feature type="disulfide bond" evidence="5">
    <location>
        <begin position="4017"/>
        <end position="4030"/>
    </location>
</feature>
<feature type="disulfide bond" evidence="5">
    <location>
        <begin position="4032"/>
        <end position="4047"/>
    </location>
</feature>
<feature type="disulfide bond" evidence="5">
    <location>
        <begin position="4381"/>
        <end position="4389"/>
    </location>
</feature>
<feature type="disulfide bond" evidence="5">
    <location>
        <begin position="4383"/>
        <end position="4399"/>
    </location>
</feature>
<feature type="disulfide bond" evidence="5">
    <location>
        <begin position="4401"/>
        <end position="4410"/>
    </location>
</feature>
<feature type="sequence variant" id="VAR_037009" description="In dbSNP:rs2229263." evidence="27">
    <original>N</original>
    <variation>S</variation>
    <location>
        <position position="83"/>
    </location>
</feature>
<feature type="sequence variant" id="VAR_064727" description="Found in a renal cell carcinoma sample; somatic mutation." evidence="19">
    <original>C</original>
    <variation>R</variation>
    <location>
        <position position="103"/>
    </location>
</feature>
<feature type="sequence variant" id="VAR_061294" description="In dbSNP:rs34693334.">
    <original>G</original>
    <variation>R</variation>
    <location>
        <position position="259"/>
    </location>
</feature>
<feature type="sequence variant" id="VAR_037010" description="In dbSNP:rs34291900.">
    <original>G</original>
    <variation>D</variation>
    <location>
        <position position="669"/>
    </location>
</feature>
<feature type="sequence variant" id="VAR_037011" description="In dbSNP:rs36082715.">
    <original>H</original>
    <variation>R</variation>
    <location>
        <position position="909"/>
    </location>
</feature>
<feature type="sequence variant" id="VAR_037012" description="In dbSNP:rs2302691.">
    <original>H</original>
    <variation>Q</variation>
    <location>
        <position position="1083"/>
    </location>
</feature>
<feature type="sequence variant" id="VAR_029182" description="In dbSNP:rs17848149.">
    <original>D</original>
    <variation>A</variation>
    <location>
        <position position="1279"/>
    </location>
</feature>
<feature type="sequence variant" id="VAR_005421">
    <original>A</original>
    <variation>P</variation>
    <location>
        <position position="1287"/>
    </location>
</feature>
<feature type="sequence variant" id="VAR_029183" description="In dbSNP:rs4667596.">
    <original>R</original>
    <variation>K</variation>
    <location>
        <position position="2012"/>
    </location>
</feature>
<feature type="sequence variant" id="VAR_020218" description="In dbSNP:rs2228168.">
    <original>I</original>
    <variation>T</variation>
    <location>
        <position position="2065"/>
    </location>
</feature>
<feature type="sequence variant" id="VAR_037013" description="In DBS; dbSNP:rs80338747." evidence="18">
    <original>Y</original>
    <variation>H</variation>
    <location>
        <position position="2522"/>
    </location>
</feature>
<feature type="sequence variant" id="VAR_029184" description="In dbSNP:rs17848169.">
    <original>N</original>
    <variation>D</variation>
    <location>
        <position position="2632"/>
    </location>
</feature>
<feature type="sequence variant" id="VAR_005422" description="In dbSNP:rs2228171.">
    <original>A</original>
    <variation>T</variation>
    <location>
        <position position="2872"/>
    </location>
</feature>
<feature type="sequence variant" id="VAR_037014" description="In dbSNP:rs11674973.">
    <original>R</original>
    <variation>M</variation>
    <location>
        <position position="3011"/>
    </location>
</feature>
<feature type="sequence variant" id="VAR_020219" description="In dbSNP:rs3213760.">
    <original>R</original>
    <variation>H</variation>
    <location>
        <position position="3305"/>
    </location>
</feature>
<feature type="sequence variant" id="VAR_075534" description="Found in patients with mild intellectual disability; uncertain significance; dbSNP:rs199583537." evidence="23">
    <original>D</original>
    <variation>N</variation>
    <location>
        <position position="3779"/>
    </location>
</feature>
<feature type="sequence variant" id="VAR_075535" description="Found in patients with a phenotype suggestive of Stickler syndrome; uncertain significance." evidence="22">
    <original>D</original>
    <variation>G</variation>
    <location>
        <position position="3828"/>
    </location>
</feature>
<feature type="sequence variant" id="VAR_005423" description="In dbSNP:rs2075252." evidence="26">
    <original>K</original>
    <variation>E</variation>
    <location>
        <position position="4094"/>
    </location>
</feature>
<feature type="sequence variant" id="VAR_005424" description="In dbSNP:rs4667591." evidence="26">
    <original>I</original>
    <variation>L</variation>
    <location>
        <position position="4210"/>
    </location>
</feature>
<feature type="sequence variant" id="VAR_035996" description="In a colorectal cancer sample; somatic mutation." evidence="15">
    <original>M</original>
    <variation>V</variation>
    <location>
        <position position="4272"/>
    </location>
</feature>
<feature type="sequence conflict" description="In Ref. 3; AAB02882." evidence="28" ref="3">
    <original>D</original>
    <variation>G</variation>
    <location>
        <position position="2724"/>
    </location>
</feature>
<feature type="sequence conflict" description="In Ref. 3; AAB02882." evidence="28" ref="3">
    <original>A</original>
    <variation>T</variation>
    <location>
        <position position="2773"/>
    </location>
</feature>
<feature type="sequence conflict" description="In Ref. 3; AAB02882." evidence="28" ref="3">
    <original>T</original>
    <variation>P</variation>
    <location>
        <position position="2827"/>
    </location>
</feature>
<feature type="sequence conflict" description="In Ref. 3; AAB02882." evidence="28" ref="3">
    <original>HWY</original>
    <variation>TFGI</variation>
    <location>
        <begin position="2880"/>
        <end position="2882"/>
    </location>
</feature>
<feature type="sequence conflict" description="In Ref. 3; AAB02882." evidence="28" ref="3">
    <original>A</original>
    <variation>S</variation>
    <location>
        <position position="2897"/>
    </location>
</feature>
<feature type="sequence conflict" description="In Ref. 3; AAB02882." evidence="28" ref="3">
    <original>A</original>
    <variation>S</variation>
    <location>
        <position position="2908"/>
    </location>
</feature>
<feature type="sequence conflict" description="In Ref. 3; AAB02882." evidence="28" ref="3">
    <original>S</original>
    <variation>N</variation>
    <location>
        <position position="2921"/>
    </location>
</feature>
<feature type="sequence conflict" description="In Ref. 3; AAB02882." evidence="28" ref="3">
    <original>L</original>
    <variation>P</variation>
    <location>
        <position position="2954"/>
    </location>
</feature>
<feature type="sequence conflict" description="In Ref. 3; AAB02882." evidence="28" ref="3">
    <original>VC</original>
    <variation>PP</variation>
    <location>
        <begin position="2971"/>
        <end position="2972"/>
    </location>
</feature>
<feature type="sequence conflict" description="In Ref. 3; AAB02882." evidence="28" ref="3">
    <original>Y</original>
    <variation>H</variation>
    <location>
        <position position="2982"/>
    </location>
</feature>
<feature type="sequence conflict" description="In Ref. 3; AAB02882." evidence="28" ref="3">
    <original>N</original>
    <variation>I</variation>
    <location>
        <position position="2985"/>
    </location>
</feature>
<feature type="sequence conflict" description="In Ref. 3; AAB02882." evidence="28" ref="3">
    <original>T</original>
    <variation>S</variation>
    <location>
        <position position="3615"/>
    </location>
</feature>
<feature type="sequence conflict" description="In Ref. 3; AAB02882." evidence="28" ref="3">
    <original>Q</original>
    <variation>K</variation>
    <location>
        <position position="3738"/>
    </location>
</feature>
<feature type="sequence conflict" description="In Ref. 3; AAB02882." evidence="28" ref="3">
    <original>C</original>
    <variation>LW</variation>
    <location>
        <position position="3784"/>
    </location>
</feature>
<feature type="sequence conflict" description="In Ref. 3; AAB02882." evidence="28" ref="3">
    <original>C</original>
    <variation>R</variation>
    <location>
        <position position="3810"/>
    </location>
</feature>
<feature type="sequence conflict" description="In Ref. 3; AAB02882." evidence="28" ref="3">
    <original>R</original>
    <variation>P</variation>
    <location>
        <position position="4220"/>
    </location>
</feature>
<feature type="strand" evidence="31">
    <location>
        <begin position="1111"/>
        <end position="1115"/>
    </location>
</feature>
<feature type="strand" evidence="31">
    <location>
        <begin position="1121"/>
        <end position="1123"/>
    </location>
</feature>
<feature type="strand" evidence="31">
    <location>
        <begin position="1129"/>
        <end position="1131"/>
    </location>
</feature>
<feature type="strand" evidence="31">
    <location>
        <begin position="1133"/>
        <end position="1136"/>
    </location>
</feature>
<feature type="helix" evidence="31">
    <location>
        <begin position="1138"/>
        <end position="1141"/>
    </location>
</feature>
<protein>
    <recommendedName>
        <fullName>Low-density lipoprotein receptor-related protein 2</fullName>
        <shortName>LRP-2</shortName>
    </recommendedName>
    <alternativeName>
        <fullName>Glycoprotein 330</fullName>
        <shortName>gp330</shortName>
    </alternativeName>
    <alternativeName>
        <fullName>Megalin</fullName>
    </alternativeName>
</protein>